<gene>
    <name evidence="43" type="primary">KCNMA1</name>
    <name type="synonym">KCNMA</name>
    <name type="synonym">SLO</name>
</gene>
<feature type="chain" id="PRO_0000054132" description="Calcium-activated potassium channel subunit alpha-1">
    <location>
        <begin position="1"/>
        <end position="1236"/>
    </location>
</feature>
<feature type="topological domain" description="Extracellular" evidence="5">
    <location>
        <begin position="1"/>
        <end position="86"/>
    </location>
</feature>
<feature type="transmembrane region" description="Helical; Name=Segment S0" evidence="5">
    <location>
        <begin position="87"/>
        <end position="107"/>
    </location>
</feature>
<feature type="topological domain" description="Cytoplasmic" evidence="5">
    <location>
        <begin position="108"/>
        <end position="178"/>
    </location>
</feature>
<feature type="transmembrane region" description="Helical; Name=Segment S1" evidence="5">
    <location>
        <begin position="179"/>
        <end position="199"/>
    </location>
</feature>
<feature type="topological domain" description="Extracellular" evidence="5">
    <location>
        <begin position="200"/>
        <end position="214"/>
    </location>
</feature>
<feature type="transmembrane region" description="Helical; Name=Segment S2" evidence="5">
    <location>
        <begin position="215"/>
        <end position="235"/>
    </location>
</feature>
<feature type="topological domain" description="Cytoplasmic" evidence="5">
    <location>
        <begin position="236"/>
        <end position="239"/>
    </location>
</feature>
<feature type="transmembrane region" description="Helical; Name=Segment S3" evidence="5">
    <location>
        <begin position="240"/>
        <end position="260"/>
    </location>
</feature>
<feature type="topological domain" description="Extracellular" evidence="5">
    <location>
        <begin position="261"/>
        <end position="264"/>
    </location>
</feature>
<feature type="transmembrane region" description="Helical; Name=Segment S4" evidence="5">
    <location>
        <begin position="265"/>
        <end position="285"/>
    </location>
</feature>
<feature type="topological domain" description="Cytoplasmic" evidence="5">
    <location>
        <begin position="286"/>
        <end position="300"/>
    </location>
</feature>
<feature type="transmembrane region" description="Helical; Name=Segment S5" evidence="5">
    <location>
        <begin position="301"/>
        <end position="321"/>
    </location>
</feature>
<feature type="topological domain" description="Extracellular" evidence="5">
    <location>
        <begin position="322"/>
        <end position="335"/>
    </location>
</feature>
<feature type="intramembrane region" description="Pore-forming; Name=P region" evidence="5">
    <location>
        <begin position="336"/>
        <end position="358"/>
    </location>
</feature>
<feature type="topological domain" description="Extracellular" evidence="5">
    <location>
        <begin position="359"/>
        <end position="367"/>
    </location>
</feature>
<feature type="transmembrane region" description="Helical; Name=Segment S6" evidence="5">
    <location>
        <begin position="368"/>
        <end position="388"/>
    </location>
</feature>
<feature type="topological domain" description="Cytoplasmic" evidence="5">
    <location>
        <begin position="389"/>
        <end position="1236"/>
    </location>
</feature>
<feature type="domain" description="RCK N-terminal 1" evidence="6">
    <location>
        <begin position="407"/>
        <end position="549"/>
    </location>
</feature>
<feature type="domain" description="RCK N-terminal 2" evidence="6">
    <location>
        <begin position="839"/>
        <end position="983"/>
    </location>
</feature>
<feature type="region of interest" description="Disordered" evidence="7">
    <location>
        <begin position="1"/>
        <end position="61"/>
    </location>
</feature>
<feature type="region of interest" description="Segment S7">
    <location>
        <begin position="556"/>
        <end position="576"/>
    </location>
</feature>
<feature type="region of interest" description="Segment S8">
    <location>
        <begin position="613"/>
        <end position="633"/>
    </location>
</feature>
<feature type="region of interest" description="Heme-binding motif" evidence="13">
    <location>
        <begin position="677"/>
        <end position="681"/>
    </location>
</feature>
<feature type="region of interest" description="Disordered" evidence="7">
    <location>
        <begin position="757"/>
        <end position="787"/>
    </location>
</feature>
<feature type="region of interest" description="Segment S9">
    <location>
        <begin position="837"/>
        <end position="857"/>
    </location>
</feature>
<feature type="region of interest" description="Segment S10">
    <location>
        <begin position="1032"/>
        <end position="1052"/>
    </location>
</feature>
<feature type="region of interest" description="Disordered" evidence="7">
    <location>
        <begin position="1186"/>
        <end position="1236"/>
    </location>
</feature>
<feature type="short sequence motif" description="Selectivity for potassium">
    <location>
        <begin position="352"/>
        <end position="355"/>
    </location>
</feature>
<feature type="short sequence motif" description="Calcium bowl" evidence="2">
    <location>
        <begin position="1003"/>
        <end position="1025"/>
    </location>
</feature>
<feature type="compositionally biased region" description="Gly residues" evidence="7">
    <location>
        <begin position="1"/>
        <end position="21"/>
    </location>
</feature>
<feature type="compositionally biased region" description="Low complexity" evidence="7">
    <location>
        <begin position="39"/>
        <end position="60"/>
    </location>
</feature>
<feature type="compositionally biased region" description="Low complexity" evidence="7">
    <location>
        <begin position="1186"/>
        <end position="1211"/>
    </location>
</feature>
<feature type="compositionally biased region" description="Basic and acidic residues" evidence="7">
    <location>
        <begin position="1220"/>
        <end position="1236"/>
    </location>
</feature>
<feature type="binding site" evidence="42">
    <location>
        <position position="439"/>
    </location>
    <ligand>
        <name>Mg(2+)</name>
        <dbReference type="ChEBI" id="CHEBI:18420"/>
    </ligand>
</feature>
<feature type="binding site" evidence="42">
    <location>
        <position position="462"/>
    </location>
    <ligand>
        <name>Mg(2+)</name>
        <dbReference type="ChEBI" id="CHEBI:18420"/>
    </ligand>
</feature>
<feature type="binding site" evidence="42">
    <location>
        <position position="464"/>
    </location>
    <ligand>
        <name>Mg(2+)</name>
        <dbReference type="ChEBI" id="CHEBI:18420"/>
    </ligand>
</feature>
<feature type="binding site" evidence="2">
    <location>
        <position position="1012"/>
    </location>
    <ligand>
        <name>Ca(2+)</name>
        <dbReference type="ChEBI" id="CHEBI:29108"/>
    </ligand>
</feature>
<feature type="binding site" evidence="2">
    <location>
        <position position="1015"/>
    </location>
    <ligand>
        <name>Ca(2+)</name>
        <dbReference type="ChEBI" id="CHEBI:29108"/>
    </ligand>
</feature>
<feature type="binding site" evidence="2">
    <location>
        <position position="1018"/>
    </location>
    <ligand>
        <name>Ca(2+)</name>
        <dbReference type="ChEBI" id="CHEBI:29108"/>
    </ligand>
</feature>
<feature type="binding site" evidence="2">
    <location>
        <position position="1020"/>
    </location>
    <ligand>
        <name>Ca(2+)</name>
        <dbReference type="ChEBI" id="CHEBI:29108"/>
    </ligand>
</feature>
<feature type="modified residue" description="Phosphothreonine" evidence="3">
    <location>
        <position position="763"/>
    </location>
</feature>
<feature type="modified residue" description="Phosphoserine" evidence="3">
    <location>
        <position position="765"/>
    </location>
</feature>
<feature type="modified residue" description="Phosphoserine" evidence="3">
    <location>
        <position position="778"/>
    </location>
</feature>
<feature type="modified residue" description="Phosphoserine" evidence="3">
    <location>
        <position position="782"/>
    </location>
</feature>
<feature type="modified residue" description="Phosphothreonine" evidence="3">
    <location>
        <position position="970"/>
    </location>
</feature>
<feature type="modified residue" description="Phosphoserine" evidence="3">
    <location>
        <position position="978"/>
    </location>
</feature>
<feature type="modified residue" description="Phosphoserine" evidence="3">
    <location>
        <position position="982"/>
    </location>
</feature>
<feature type="modified residue" description="Phosphoserine" evidence="4">
    <location>
        <position position="1221"/>
    </location>
</feature>
<feature type="modified residue" description="Phosphoserine" evidence="4">
    <location>
        <position position="1224"/>
    </location>
</feature>
<feature type="lipid moiety-binding region" description="S-palmitoyl cysteine" evidence="18 19">
    <location>
        <position position="118"/>
    </location>
</feature>
<feature type="lipid moiety-binding region" description="S-palmitoyl cysteine" evidence="18 19">
    <location>
        <position position="119"/>
    </location>
</feature>
<feature type="lipid moiety-binding region" description="S-palmitoyl cysteine" evidence="18 19">
    <location>
        <position position="121"/>
    </location>
</feature>
<feature type="splice variant" id="VSP_009952" description="In isoform 6." evidence="33">
    <original>EAQKINNGSSQADGTLKPVDEKEEAVAAEVGWMTSVKDWAGV</original>
    <variation>ATHFGSPEMPPAARSWSGSPPEAAVLRGASSLALEVARCRRL</variation>
    <location>
        <begin position="127"/>
        <end position="168"/>
    </location>
</feature>
<feature type="splice variant" id="VSP_009953" description="In isoform 6." evidence="33">
    <location>
        <begin position="169"/>
        <end position="1236"/>
    </location>
</feature>
<feature type="splice variant" id="VSP_009954" description="In isoform 3." evidence="36">
    <original>R</original>
    <variation>RSRKR</variation>
    <location>
        <position position="643"/>
    </location>
</feature>
<feature type="splice variant" id="VSP_009955" description="In isoform 2 and isoform 5." evidence="32 33 34 35 37 38 39 40 41">
    <original>PKMSIYKRMRRACCFDCGRSERDCSCMSGRVRGNVDTLERAFPLSSVSVNDCSTSFRAF</original>
    <variation>L</variation>
    <location>
        <begin position="698"/>
        <end position="756"/>
    </location>
</feature>
<feature type="splice variant" id="VSP_009956" description="In isoform 4." evidence="36 38">
    <original>PKMSIYKRMRRACCFDCGRSERDCSCMSGRVRGNVDTLERAFPLSSVSVNDCSTSFRAF</original>
    <variation>LKVAARSRYSKDPFEFKKETPNSRLVTEPV</variation>
    <location>
        <begin position="698"/>
        <end position="756"/>
    </location>
</feature>
<feature type="splice variant" id="VSP_009957" description="In isoform 7." evidence="42">
    <original>PKMSIYKRMRRACCFDCGRSERDCSCMSGRVRGNVDTLERAFPLSSVSVNDCSTSFRAF</original>
    <variation>RWEEHCSLWRLESKGNVRRLNYCRGQQTFSVKVKVAARSRYSKDPFEFKKETPNSRLVTEPV</variation>
    <location>
        <begin position="698"/>
        <end position="756"/>
    </location>
</feature>
<feature type="splice variant" id="VSP_009958" description="In isoform 2." evidence="41">
    <original>L</original>
    <variation>LVTGWMPYLGPRVLMTCLDIGVVCMPTDIQSTSPASIKKFKE</variation>
    <location>
        <position position="828"/>
    </location>
</feature>
<feature type="sequence variant" id="VAR_083554" description="In LIWAS; loss of voltage-gated potassium channel activity; dbSNP:rs1554829003." evidence="25">
    <original>G</original>
    <variation>R</variation>
    <location>
        <position position="375"/>
    </location>
</feature>
<feature type="sequence variant" id="VAR_023821" description="In PNKD3; may have a synergistic effect with ethanol in the triggering of symptoms; dbSNP:rs137853333." evidence="14">
    <original>D</original>
    <variation>G</variation>
    <location>
        <position position="434"/>
    </location>
</feature>
<feature type="sequence variant" id="VAR_083555" description="In CADEDS." evidence="24">
    <location>
        <begin position="458"/>
        <end position="1236"/>
    </location>
</feature>
<feature type="sequence variant" id="VAR_083204" description="Found in a patient with epileptic encephalopathy; uncertain significance; no effect on voltage-dependent sensitivity; dbSNP:rs201996416." evidence="23">
    <original>K</original>
    <variation>N</variation>
    <location>
        <position position="518"/>
    </location>
</feature>
<feature type="sequence variant" id="VAR_083205" description="Found in a patient with epilepsy; uncertain significance; no effect on voltage-dependent sensitivity; dbSNP:rs917980352." evidence="23">
    <original>E</original>
    <variation>A</variation>
    <location>
        <position position="656"/>
    </location>
</feature>
<feature type="sequence variant" id="VAR_079156" description="In PNKD3." evidence="21">
    <original>E</original>
    <variation>K</variation>
    <location>
        <position position="884"/>
    </location>
</feature>
<feature type="sequence variant" id="VAR_079157" description="In PNKD3 and EIG16; increased sensitivity to voltage-dependent activation resulting in increased channel activity; no change in calcium sensitivity; dbSNP:rs886039469." evidence="21 23">
    <original>N</original>
    <variation>S</variation>
    <location>
        <position position="1053"/>
    </location>
</feature>
<feature type="sequence variant" id="VAR_083206" description="Found in patient with epilepsy; uncertain significance; dbSNP:rs563967757." evidence="23">
    <original>N</original>
    <variation>S</variation>
    <location>
        <position position="1217"/>
    </location>
</feature>
<feature type="mutagenesis site" description="Decreased localization to the plasma membrane. Abolishes localization to the plasma membrane; when associated with A-119 and A-121." evidence="18 19">
    <original>C</original>
    <variation>A</variation>
    <location>
        <position position="118"/>
    </location>
</feature>
<feature type="mutagenesis site" description="Decreased localization to the plasma membrane. Abolishes localization to the plasma membrane; when associated with A-118 and A-121." evidence="18 19">
    <original>C</original>
    <variation>A</variation>
    <location>
        <position position="119"/>
    </location>
</feature>
<feature type="mutagenesis site" description="Decreased localization to the plasma membrane. Abolishes localization to the plasma membrane; when associated with A-119 and A-121." evidence="18 19">
    <original>C</original>
    <variation>A</variation>
    <location>
        <position position="121"/>
    </location>
</feature>
<feature type="mutagenesis site" description="No effect in the coupling between calcium and channel opening." evidence="31">
    <original>L</original>
    <variation>R</variation>
    <variation>H</variation>
    <location>
        <position position="269"/>
    </location>
</feature>
<feature type="mutagenesis site" description="Induces reduction in the coupling between calcium and channel opening." evidence="31">
    <original>R</original>
    <variation>E</variation>
    <location>
        <position position="272"/>
    </location>
</feature>
<feature type="mutagenesis site" description="Induces reduction in the coupling between calcium and channel opening." evidence="31">
    <original>R</original>
    <variation>N</variation>
    <location>
        <position position="275"/>
    </location>
</feature>
<feature type="mutagenesis site" description="Induces reduction in the coupling between calcium and channel opening." evidence="31">
    <original>R</original>
    <variation>Q</variation>
    <location>
        <position position="278"/>
    </location>
</feature>
<feature type="mutagenesis site" description="No effect in the coupling between calcium and channel opening." evidence="31">
    <original>Q</original>
    <variation>R</variation>
    <location>
        <position position="281"/>
    </location>
</feature>
<feature type="mutagenesis site" description="No effect in the coupling between calcium and channel opening." evidence="31">
    <original>E</original>
    <variation>K</variation>
    <location>
        <position position="284"/>
    </location>
</feature>
<feature type="mutagenesis site" description="Activated at more negative voltages. Slower rate of inactivation. Impaired inhibition by HMIMP. No effect on channel inhibition by Iberiotoxin." evidence="15">
    <original>T</original>
    <variation>S</variation>
    <location>
        <position position="352"/>
    </location>
</feature>
<feature type="mutagenesis site" description="Loss of function." evidence="10">
    <original>GYG</original>
    <variation>AAA</variation>
    <location>
        <begin position="354"/>
        <end position="356"/>
    </location>
</feature>
<feature type="mutagenesis site" description="Loss of function." evidence="15">
    <original>F</original>
    <variation>A</variation>
    <location>
        <position position="380"/>
    </location>
</feature>
<feature type="mutagenesis site" description="Activated at more negative voltages. No effect on inhibition by HMIMP." evidence="15">
    <original>A</original>
    <variation>S</variation>
    <location>
        <position position="381"/>
    </location>
</feature>
<feature type="mutagenesis site" description="No effect on activation voltage. No effect on inhibition by HMIMP." evidence="15">
    <original>V</original>
    <variation>I</variation>
    <location>
        <position position="384"/>
    </location>
</feature>
<feature type="mutagenesis site" description="Loss of heme-induced channel inhibition." evidence="13">
    <original>C</original>
    <variation>S</variation>
    <location>
        <position position="680"/>
    </location>
</feature>
<feature type="mutagenesis site" description="Loss of heme-induced channel inhibition." evidence="13">
    <original>H</original>
    <variation>R</variation>
    <location>
        <position position="681"/>
    </location>
</feature>
<feature type="sequence conflict" description="In Ref. 9; AAA50216." evidence="42" ref="9">
    <original>M</original>
    <variation>N</variation>
    <location>
        <position position="25"/>
    </location>
</feature>
<feature type="sequence conflict" description="In Ref. 9; AAA50216." evidence="42" ref="9">
    <original>S</original>
    <variation>G</variation>
    <location>
        <position position="35"/>
    </location>
</feature>
<feature type="sequence conflict" description="In Ref. 1; AAA85104." evidence="42" ref="1">
    <original>A</original>
    <variation>V</variation>
    <location>
        <position position="38"/>
    </location>
</feature>
<feature type="sequence conflict" description="In Ref. 12; AAD31173." evidence="42" ref="12">
    <original>N</original>
    <variation>D</variation>
    <location>
        <position position="449"/>
    </location>
</feature>
<feature type="sequence conflict" description="In Ref. 6; AAC50353." evidence="42" ref="6">
    <original>N</original>
    <variation>H</variation>
    <location>
        <position position="805"/>
    </location>
</feature>
<feature type="sequence conflict" description="In Ref. 12; AAD31173." evidence="42" ref="12">
    <original>T</original>
    <variation>A</variation>
    <location>
        <position position="1152"/>
    </location>
</feature>
<feature type="helix" evidence="51">
    <location>
        <begin position="87"/>
        <end position="111"/>
    </location>
</feature>
<feature type="turn" evidence="51">
    <location>
        <begin position="112"/>
        <end position="116"/>
    </location>
</feature>
<feature type="helix" evidence="51">
    <location>
        <begin position="158"/>
        <end position="170"/>
    </location>
</feature>
<feature type="turn" evidence="51">
    <location>
        <begin position="171"/>
        <end position="173"/>
    </location>
</feature>
<feature type="helix" evidence="51">
    <location>
        <begin position="175"/>
        <end position="198"/>
    </location>
</feature>
<feature type="strand" evidence="51">
    <location>
        <begin position="203"/>
        <end position="205"/>
    </location>
</feature>
<feature type="turn" evidence="51">
    <location>
        <begin position="209"/>
        <end position="211"/>
    </location>
</feature>
<feature type="helix" evidence="51">
    <location>
        <begin position="214"/>
        <end position="234"/>
    </location>
</feature>
<feature type="helix" evidence="51">
    <location>
        <begin position="239"/>
        <end position="243"/>
    </location>
</feature>
<feature type="helix" evidence="51">
    <location>
        <begin position="246"/>
        <end position="264"/>
    </location>
</feature>
<feature type="strand" evidence="50">
    <location>
        <begin position="266"/>
        <end position="268"/>
    </location>
</feature>
<feature type="helix" evidence="51">
    <location>
        <begin position="273"/>
        <end position="281"/>
    </location>
</feature>
<feature type="helix" evidence="51">
    <location>
        <begin position="282"/>
        <end position="288"/>
    </location>
</feature>
<feature type="helix" evidence="51">
    <location>
        <begin position="297"/>
        <end position="324"/>
    </location>
</feature>
<feature type="helix" evidence="51">
    <location>
        <begin position="327"/>
        <end position="329"/>
    </location>
</feature>
<feature type="helix" evidence="51">
    <location>
        <begin position="339"/>
        <end position="350"/>
    </location>
</feature>
<feature type="strand" evidence="50">
    <location>
        <begin position="356"/>
        <end position="358"/>
    </location>
</feature>
<feature type="helix" evidence="51">
    <location>
        <begin position="363"/>
        <end position="391"/>
    </location>
</feature>
<feature type="strand" evidence="46">
    <location>
        <begin position="392"/>
        <end position="395"/>
    </location>
</feature>
<feature type="strand" evidence="49">
    <location>
        <begin position="409"/>
        <end position="415"/>
    </location>
</feature>
<feature type="helix" evidence="49">
    <location>
        <begin position="418"/>
        <end position="431"/>
    </location>
</feature>
<feature type="helix" evidence="49">
    <location>
        <begin position="435"/>
        <end position="437"/>
    </location>
</feature>
<feature type="strand" evidence="49">
    <location>
        <begin position="439"/>
        <end position="446"/>
    </location>
</feature>
<feature type="helix" evidence="49">
    <location>
        <begin position="453"/>
        <end position="459"/>
    </location>
</feature>
<feature type="strand" evidence="49">
    <location>
        <begin position="463"/>
        <end position="468"/>
    </location>
</feature>
<feature type="strand" evidence="45">
    <location>
        <begin position="470"/>
        <end position="472"/>
    </location>
</feature>
<feature type="helix" evidence="49">
    <location>
        <begin position="473"/>
        <end position="478"/>
    </location>
</feature>
<feature type="helix" evidence="49">
    <location>
        <begin position="481"/>
        <end position="483"/>
    </location>
</feature>
<feature type="strand" evidence="49">
    <location>
        <begin position="485"/>
        <end position="490"/>
    </location>
</feature>
<feature type="helix" evidence="49">
    <location>
        <begin position="498"/>
        <end position="515"/>
    </location>
</feature>
<feature type="strand" evidence="49">
    <location>
        <begin position="521"/>
        <end position="527"/>
    </location>
</feature>
<feature type="helix" evidence="49">
    <location>
        <begin position="528"/>
        <end position="531"/>
    </location>
</feature>
<feature type="helix" evidence="49">
    <location>
        <begin position="532"/>
        <end position="536"/>
    </location>
</feature>
<feature type="strand" evidence="48">
    <location>
        <begin position="537"/>
        <end position="539"/>
    </location>
</feature>
<feature type="helix" evidence="49">
    <location>
        <begin position="542"/>
        <end position="544"/>
    </location>
</feature>
<feature type="strand" evidence="49">
    <location>
        <begin position="547"/>
        <end position="550"/>
    </location>
</feature>
<feature type="helix" evidence="49">
    <location>
        <begin position="551"/>
        <end position="564"/>
    </location>
</feature>
<feature type="helix" evidence="49">
    <location>
        <begin position="568"/>
        <end position="574"/>
    </location>
</feature>
<feature type="strand" evidence="44">
    <location>
        <begin position="586"/>
        <end position="588"/>
    </location>
</feature>
<feature type="helix" evidence="49">
    <location>
        <begin position="589"/>
        <end position="597"/>
    </location>
</feature>
<feature type="strand" evidence="49">
    <location>
        <begin position="600"/>
        <end position="605"/>
    </location>
</feature>
<feature type="helix" evidence="49">
    <location>
        <begin position="608"/>
        <end position="610"/>
    </location>
</feature>
<feature type="helix" evidence="49">
    <location>
        <begin position="615"/>
        <end position="626"/>
    </location>
</feature>
<feature type="strand" evidence="49">
    <location>
        <begin position="629"/>
        <end position="634"/>
    </location>
</feature>
<feature type="strand" evidence="45">
    <location>
        <begin position="638"/>
        <end position="640"/>
    </location>
</feature>
<feature type="strand" evidence="49">
    <location>
        <begin position="644"/>
        <end position="647"/>
    </location>
</feature>
<feature type="strand" evidence="47">
    <location>
        <begin position="650"/>
        <end position="653"/>
    </location>
</feature>
<feature type="strand" evidence="49">
    <location>
        <begin position="659"/>
        <end position="665"/>
    </location>
</feature>
<feature type="helix" evidence="49">
    <location>
        <begin position="667"/>
        <end position="670"/>
    </location>
</feature>
<feature type="helix" evidence="49">
    <location>
        <begin position="672"/>
        <end position="675"/>
    </location>
</feature>
<feature type="turn" evidence="46">
    <location>
        <begin position="678"/>
        <end position="681"/>
    </location>
</feature>
<feature type="helix" evidence="45">
    <location>
        <begin position="685"/>
        <end position="689"/>
    </location>
</feature>
<feature type="helix" evidence="44">
    <location>
        <begin position="803"/>
        <end position="805"/>
    </location>
</feature>
<feature type="strand" evidence="49">
    <location>
        <begin position="813"/>
        <end position="816"/>
    </location>
</feature>
<feature type="helix" evidence="49">
    <location>
        <begin position="823"/>
        <end position="825"/>
    </location>
</feature>
<feature type="helix" evidence="49">
    <location>
        <begin position="830"/>
        <end position="835"/>
    </location>
</feature>
<feature type="strand" evidence="49">
    <location>
        <begin position="842"/>
        <end position="847"/>
    </location>
</feature>
<feature type="strand" evidence="51">
    <location>
        <begin position="850"/>
        <end position="852"/>
    </location>
</feature>
<feature type="helix" evidence="49">
    <location>
        <begin position="858"/>
        <end position="861"/>
    </location>
</feature>
<feature type="helix" evidence="49">
    <location>
        <begin position="863"/>
        <end position="865"/>
    </location>
</feature>
<feature type="strand" evidence="45">
    <location>
        <begin position="867"/>
        <end position="869"/>
    </location>
</feature>
<feature type="helix" evidence="49">
    <location>
        <begin position="871"/>
        <end position="873"/>
    </location>
</feature>
<feature type="strand" evidence="49">
    <location>
        <begin position="877"/>
        <end position="881"/>
    </location>
</feature>
<feature type="helix" evidence="49">
    <location>
        <begin position="883"/>
        <end position="889"/>
    </location>
</feature>
<feature type="helix" evidence="49">
    <location>
        <begin position="890"/>
        <end position="892"/>
    </location>
</feature>
<feature type="turn" evidence="49">
    <location>
        <begin position="893"/>
        <end position="895"/>
    </location>
</feature>
<feature type="strand" evidence="49">
    <location>
        <begin position="896"/>
        <end position="904"/>
    </location>
</feature>
<feature type="helix" evidence="49">
    <location>
        <begin position="909"/>
        <end position="914"/>
    </location>
</feature>
<feature type="helix" evidence="49">
    <location>
        <begin position="917"/>
        <end position="919"/>
    </location>
</feature>
<feature type="strand" evidence="49">
    <location>
        <begin position="921"/>
        <end position="927"/>
    </location>
</feature>
<feature type="strand" evidence="51">
    <location>
        <begin position="930"/>
        <end position="932"/>
    </location>
</feature>
<feature type="strand" evidence="51">
    <location>
        <begin position="936"/>
        <end position="938"/>
    </location>
</feature>
<feature type="helix" evidence="49">
    <location>
        <begin position="941"/>
        <end position="952"/>
    </location>
</feature>
<feature type="strand" evidence="49">
    <location>
        <begin position="994"/>
        <end position="996"/>
    </location>
</feature>
<feature type="strand" evidence="49">
    <location>
        <begin position="1001"/>
        <end position="1007"/>
    </location>
</feature>
<feature type="helix" evidence="49">
    <location>
        <begin position="1008"/>
        <end position="1013"/>
    </location>
</feature>
<feature type="strand" evidence="49">
    <location>
        <begin position="1016"/>
        <end position="1018"/>
    </location>
</feature>
<feature type="strand" evidence="50">
    <location>
        <begin position="1022"/>
        <end position="1024"/>
    </location>
</feature>
<feature type="helix" evidence="49">
    <location>
        <begin position="1026"/>
        <end position="1028"/>
    </location>
</feature>
<feature type="helix" evidence="49">
    <location>
        <begin position="1030"/>
        <end position="1033"/>
    </location>
</feature>
<feature type="strand" evidence="49">
    <location>
        <begin position="1036"/>
        <end position="1039"/>
    </location>
</feature>
<feature type="helix" evidence="49">
    <location>
        <begin position="1040"/>
        <end position="1044"/>
    </location>
</feature>
<feature type="helix" evidence="49">
    <location>
        <begin position="1045"/>
        <end position="1052"/>
    </location>
</feature>
<feature type="helix" evidence="49">
    <location>
        <begin position="1055"/>
        <end position="1065"/>
    </location>
</feature>
<feature type="helix" evidence="49">
    <location>
        <begin position="1074"/>
        <end position="1079"/>
    </location>
</feature>
<feature type="helix" evidence="49">
    <location>
        <begin position="1089"/>
        <end position="1093"/>
    </location>
</feature>
<feature type="helix" evidence="47">
    <location>
        <begin position="1094"/>
        <end position="1096"/>
    </location>
</feature>
<feature type="strand" evidence="49">
    <location>
        <begin position="1099"/>
        <end position="1104"/>
    </location>
</feature>
<feature type="strand" evidence="49">
    <location>
        <begin position="1106"/>
        <end position="1108"/>
    </location>
</feature>
<feature type="helix" evidence="49">
    <location>
        <begin position="1111"/>
        <end position="1114"/>
    </location>
</feature>
<feature type="helix" evidence="49">
    <location>
        <begin position="1119"/>
        <end position="1130"/>
    </location>
</feature>
<feature type="strand" evidence="49">
    <location>
        <begin position="1133"/>
        <end position="1140"/>
    </location>
</feature>
<feature type="strand" evidence="51">
    <location>
        <begin position="1143"/>
        <end position="1147"/>
    </location>
</feature>
<feature type="strand" evidence="49">
    <location>
        <begin position="1154"/>
        <end position="1159"/>
    </location>
</feature>
<feature type="strand" evidence="49">
    <location>
        <begin position="1171"/>
        <end position="1176"/>
    </location>
</feature>
<feature type="sequence conflict" description="In Ref. 13; no nucleotide entry." evidence="42" ref="13">
    <original>FS</original>
    <variation>SF</variation>
    <location sequence="Q12791-7">
        <begin position="726"/>
        <end position="727"/>
    </location>
</feature>
<comment type="function">
    <text evidence="13 23 25 26">Potassium channel activated by both membrane depolarization or increase in cytosolic Ca(2+) that mediates export of K(+) (PubMed:14523450, PubMed:29330545, PubMed:31152168). It is also activated by the concentration of cytosolic Mg(2+). Its activation dampens the excitatory events that elevate the cytosolic Ca(2+) concentration and/or depolarize the cell membrane. It therefore contributes to repolarization of the membrane potential. Plays a key role in controlling excitability in a number of systems, such as regulation of the contraction of smooth muscle, the tuning of hair cells in the cochlea, regulation of transmitter release, and innate immunity. In smooth muscles, its activation by high level of Ca(2+), caused by ryanodine receptors in the sarcoplasmic reticulum, regulates the membrane potential. In cochlea cells, its number and kinetic properties partly determine the characteristic frequency of each hair cell and thereby helps to establish a tonotopic map. Kinetics of KCNMA1 channels are determined by alternative splicing, phosphorylation status and its combination with modulating beta subunits. Highly sensitive to both iberiotoxin (IbTx) and charybdotoxin (CTX). Possibly induces sleep when activated by melatonin and through melatonin receptor MTNR1A-dependent dissociation of G-beta and G-gamma subunits, leading to increased sensitivity to Ca(2+) and reduced synaptic transmission (PubMed:32958651).</text>
</comment>
<comment type="function">
    <molecule>Isoform 5</molecule>
    <text evidence="27 28">Potassium channel activated by both membrane depolarization or increase in cytosolic Ca(2+) that mediates export of K(+).</text>
</comment>
<comment type="catalytic activity">
    <reaction evidence="13 23 25">
        <text>K(+)(in) = K(+)(out)</text>
        <dbReference type="Rhea" id="RHEA:29463"/>
        <dbReference type="ChEBI" id="CHEBI:29103"/>
    </reaction>
</comment>
<comment type="catalytic activity">
    <molecule>Isoform 5</molecule>
    <reaction evidence="27 28">
        <text>K(+)(in) = K(+)(out)</text>
        <dbReference type="Rhea" id="RHEA:29463"/>
        <dbReference type="ChEBI" id="CHEBI:29103"/>
    </reaction>
</comment>
<comment type="activity regulation">
    <text evidence="13">Ethanol and carbon monoxide-bound heme increase channel activation. Heme inhibits channel activation.</text>
</comment>
<comment type="subunit">
    <text evidence="3 8 9 11 16 17 20">Homotetramer; which constitutes the calcium-activated potassium channel. Interacts with RAB11B (By similarity). Interacts with beta subunits KCNMB1, KCNMB2, KCNMB3 and KCNMB4. Interacts with gamma subunits LRRC26, LRRC38, LRRC52 and LRRC55. Beta and gamma subunits are accessory, and modulate its activity.</text>
</comment>
<comment type="interaction">
    <interactant intactId="EBI-1220676">
        <id>Q12791</id>
    </interactant>
    <interactant intactId="EBI-15863320">
        <id>Q2I0M4</id>
        <label>LRRC26</label>
    </interactant>
    <organismsDiffer>false</organismsDiffer>
    <experiments>3</experiments>
</comment>
<comment type="interaction">
    <interactant intactId="EBI-1220676">
        <id>Q12791</id>
    </interactant>
    <interactant intactId="EBI-15686410">
        <id>Q6NXK8-1</id>
        <label>Asic1</label>
    </interactant>
    <organismsDiffer>true</organismsDiffer>
    <experiments>2</experiments>
</comment>
<comment type="interaction">
    <interactant intactId="EBI-15861807">
        <id>Q12791-5</id>
    </interactant>
    <interactant intactId="EBI-15861807">
        <id>Q12791-5</id>
        <label>KCNMA1</label>
    </interactant>
    <organismsDiffer>false</organismsDiffer>
    <experiments>2</experiments>
</comment>
<comment type="interaction">
    <interactant intactId="EBI-15861807">
        <id>Q12791-5</id>
    </interactant>
    <interactant intactId="EBI-15863320">
        <id>Q2I0M4</id>
        <label>LRRC26</label>
    </interactant>
    <organismsDiffer>false</organismsDiffer>
    <experiments>2</experiments>
</comment>
<comment type="interaction">
    <interactant intactId="EBI-15861807">
        <id>Q12791-5</id>
    </interactant>
    <interactant intactId="EBI-15885629">
        <id>P21731-3</id>
        <label>TBXA2R</label>
    </interactant>
    <organismsDiffer>false</organismsDiffer>
    <experiments>7</experiments>
</comment>
<comment type="subcellular location">
    <subcellularLocation>
        <location evidence="18 19">Cell membrane</location>
        <topology evidence="18 19">Multi-pass membrane protein</topology>
    </subcellularLocation>
</comment>
<comment type="alternative products">
    <event type="alternative splicing"/>
    <isoform>
        <id>Q12791-1</id>
        <name>1</name>
        <name>SAKCA</name>
        <sequence type="displayed"/>
    </isoform>
    <isoform>
        <id>Q12791-2</id>
        <name>2</name>
        <name>BKTM</name>
        <sequence type="described" ref="VSP_009955 VSP_009958"/>
    </isoform>
    <isoform>
        <id>Q12791-3</id>
        <name>3</name>
        <sequence type="described" ref="VSP_009954"/>
    </isoform>
    <isoform>
        <id>Q12791-4</id>
        <name>4</name>
        <name>hbr5</name>
        <sequence type="described" ref="VSP_009956"/>
    </isoform>
    <isoform>
        <id>Q12791-5</id>
        <name>5</name>
        <sequence type="described" ref="VSP_009955"/>
    </isoform>
    <isoform>
        <id>Q12791-6</id>
        <name>6</name>
        <sequence type="described" ref="VSP_009952 VSP_009953"/>
    </isoform>
    <isoform>
        <id>Q12791-7</id>
        <name>7</name>
        <name>gBK</name>
        <sequence type="described" ref="VSP_009957"/>
    </isoform>
    <text>May be partially controlled by hormonal stress. Additional isoforms seem to exist.</text>
</comment>
<comment type="tissue specificity">
    <text evidence="12">Widely expressed. Except in myocytes, it is almost ubiquitously expressed.</text>
</comment>
<comment type="domain">
    <text evidence="29">The S0 segment is essential for the modulation by the accessory beta subunits KCNMB1, KCNMB2, KCNMB3 and KCNMB4.</text>
</comment>
<comment type="domain">
    <text evidence="31">The S4 segment, which is characterized by a series of positively charged amino acids at every third position, is part of the voltage-sensor.</text>
</comment>
<comment type="domain">
    <text evidence="30">The pore-forming domain (also referred as P region) is imbedded into the membrane, and forms the selectivity filter of the pore. It contains the signature sequence of potassium channels that displays selectivity to potassium.</text>
</comment>
<comment type="domain">
    <text evidence="1">The RCK N-terminal domain mediates the homotetramerization, thereby promoting the assembly of monomers into functional potassium channel. It includes binding sites for Ca(2+) and Mg(2+) (By similarity).</text>
</comment>
<comment type="domain">
    <text evidence="2">The calcium bowl constitutes one of the Ca(2+) sensors and probably acts as a Ca(2+)-binding site. There are however other Ca(2+) sensors region required for activation of the channel.</text>
</comment>
<comment type="domain">
    <text evidence="13">The heme-binding motif mediates inhibition of channel activation by heme. Carbon monoxide-bound heme leads to increased channel activation.</text>
</comment>
<comment type="PTM">
    <text evidence="42">Phosphorylated (Probable). Phosphorylation by kinases such as PKA and/or PKG. In smooth muscles, phosphorylation affects its activity.</text>
</comment>
<comment type="PTM">
    <text evidence="18 19">Palmitoylation by ZDHHC22 and ZDHHC23 within the intracellular linker between the S0 and S1 transmembrane domains regulates localization to the plasma membrane. Depalmitoylated by LYPLA1 and LYPLAL1, leading to retard exit from the trans-Golgi network.</text>
</comment>
<comment type="disease" evidence="14 21">
    <disease id="DI-00503">
        <name>Paroxysmal non-kinesigenic dyskinesia 3 with or without generalized epilepsy</name>
        <acronym>PNKD3</acronym>
        <description>An autosomal dominant neurologic disorder characterized by absence seizures, generalized tonic-clonic seizures, paroxysmal nonkinesigenic dyskinesia and involuntary dystonic or choreiform movements. Onset is usually in childhood. Patients may have seizures only, dyskinesia only, or both.</description>
        <dbReference type="MIM" id="609446"/>
    </disease>
    <text>The disease is caused by variants affecting the gene represented in this entry.</text>
</comment>
<comment type="disease" evidence="23">
    <disease id="DI-05665">
        <name>Epilepsy, idiopathic generalized 16</name>
        <acronym>EIG16</acronym>
        <description>An autosomal dominant form of idiopathic generalized epilepsy, a disorder characterized by recurring generalized seizures in the absence of detectable brain lesions and/or metabolic abnormalities. Generalized seizures arise diffusely and simultaneously from both hemispheres of the brain. Seizure types include juvenile myoclonic seizures, absence seizures, and generalized tonic-clonic seizures. EIG16 is characterized by onset of seizures soon after birth or in the first years of life.</description>
        <dbReference type="MIM" id="618596"/>
    </disease>
    <text>Disease susceptibility is associated with variants affecting the gene represented in this entry.</text>
</comment>
<comment type="disease" evidence="22 24">
    <disease id="DI-05076">
        <name>Cerebellar atrophy, developmental delay, and seizures</name>
        <acronym>CADEDS</acronym>
        <description>An autosomal recessive disease characterized by epilepsy, developmental delay and severe cerebellar atrophy.</description>
        <dbReference type="MIM" id="617643"/>
    </disease>
    <text>The disease is caused by variants affecting the gene represented in this entry.</text>
</comment>
<comment type="disease" evidence="25">
    <disease id="DI-05730">
        <name>Liang-Wang syndrome</name>
        <acronym>LIWAS</acronym>
        <description>An autosomal dominant syndrome characterized by a highly variable phenotype and severity. The broad spectrum of clinical features includes developmental delay, intellectual disability, ataxia, axial hypotonia, and poor or absent speech, visceral and cardiac malformations, connective tissue presentations with arterial involvement, bone dysplasia and characteristic craniofacial dysmorphism. About half of patients have cerebral and cerebellar atrophy, and thin corpus callosum.</description>
        <dbReference type="MIM" id="618729"/>
    </disease>
    <text>The disease is caused by variants affecting the gene represented in this entry.</text>
</comment>
<comment type="miscellaneous">
    <text>The protein was initially thought to contain two functionally distinct parts: The core channel (from the N-terminus to the S9 segment) that mediates the channel activity, and the cytoplasmic tail (from the S9 segment to the C-terminus) that mediates the calcium sensing. The situation is however more complex, since the core channel also contains binding sites for Ca(2+) and Mg(2+).</text>
</comment>
<comment type="similarity">
    <text evidence="42">Belongs to the potassium channel family. Calcium-activated (TC 1.A.1.3) subfamily. KCa1.1/KCNMA1 sub-subfamily.</text>
</comment>
<comment type="sequence caution" evidence="42">
    <conflict type="miscellaneous discrepancy">
        <sequence resource="EMBL-CDS" id="AAA50216"/>
    </conflict>
    <text>Contaminating sequence. Sequence of unknown origin in the N-terminal part.</text>
</comment>
<comment type="sequence caution" evidence="42">
    <conflict type="erroneous initiation">
        <sequence resource="EMBL-CDS" id="AAB65837"/>
    </conflict>
    <text>Truncated N-terminus.</text>
</comment>
<comment type="sequence caution" evidence="42">
    <conflict type="erroneous initiation">
        <sequence resource="EMBL-CDS" id="AAC50353"/>
    </conflict>
    <text>Truncated N-terminus.</text>
</comment>
<comment type="sequence caution" evidence="42">
    <conflict type="erroneous initiation">
        <sequence resource="EMBL-CDS" id="AAK91504"/>
    </conflict>
    <text>Truncated N-terminus.</text>
</comment>
<comment type="sequence caution" evidence="42">
    <conflict type="erroneous initiation">
        <sequence resource="EMBL-CDS" id="BAD06365"/>
    </conflict>
    <text>Truncated N-terminus.</text>
</comment>
<sequence length="1236" mass="137560">MANGGGGGGGSSGGGGGGGGSSLRMSSNIHANHLSLDASSSSSSSSSSSSSSSSSSSSSSVHEPKMDALIIPVTMEVPCDSRGQRMWWAFLASSMVTFFGGLFIILLWRTLKYLWTVCCHCGGKTKEAQKINNGSSQADGTLKPVDEKEEAVAAEVGWMTSVKDWAGVMISAQTLTGRVLVVLVFALSIGALVIYFIDSSNPIESCQNFYKDFTLQIDMAFNVFFLLYFGLRFIAANDKLWFWLEVNSVVDFFTVPPVFVSVYLNRSWLGLRFLRALRLIQFSEILQFLNILKTSNSIKLVNLLSIFISTWLTAAGFIHLVENSGDPWENFQNNQALTYWECVYLLMVTMSTVGYGDVYAKTTLGRLFMVFFILGGLAMFASYVPEIIELIGNRKKYGGSYSAVSGRKHIVVCGHITLESVSNFLKDFLHKDRDDVNVEIVFLHNISPNLELEALFKRHFTQVEFYQGSVLNPHDLARVKIESADACLILANKYCADPDAEDASNIMRVISIKNYHPKIRIITQMLQYHNKAHLLNIPSWNWKEGDDAICLAELKLGFIAQSCLAQGLSTMLANLFSMRSFIKIEEDTWQKYYLEGVSNEMYTEYLSSAFVGLSFPTVCELCFVKLKLLMIAIEYKSANRESRILINPGNHLKIQEGTLGFFIASDAKEVKRAFFYCKACHDDITDPKRIKKCGCKRPKMSIYKRMRRACCFDCGRSERDCSCMSGRVRGNVDTLERAFPLSSVSVNDCSTSFRAFEDEQPSTLSPKKKQRNGGMRNSPNTSPKLMRHDPLLIPGNDQIDNMDSNVKKYDSTGMFHWCAPKEIEKVILTRSEAAMTVLSGHVVVCIFGDVSSALIGLRNLVMPLRASNFHYHELKHIVFVGSIEYLKREWETLHNFPKVSILPGTPLSRADLRAVNINLCDMCVILSANQNNIDDTSLQDKECILASLNIKSMQFDDSIGVLQANSQGFTPPGMDRSSPDNSPVHGMLRQPSITTGVNIPIITELVNDTNVQFLDQDDDDDPDTELYLTQPFACGTAFAVSVLDSLMSATYFNDNILTLIRTLVTGGATPELEALIAEENALRGGYSTPQTLANRDRCRVAQLALLDGPFADLGDGGCYGDLFCKALKTYNMLCFGIYRLRDAHLSTPSQCTKRYVITNPPYEFELVPTDLIFCLMQFDHNAGQSRASLSHSSHSSQSSSKKSSSVHSIPSTANRQNRPKSRESRDKQKYVQEERL</sequence>
<accession>Q12791</accession>
<accession>F8WA96</accession>
<accession>Q12886</accession>
<accession>Q12917</accession>
<accession>Q12921</accession>
<accession>Q12960</accession>
<accession>Q13150</accession>
<accession>Q5JQ23</accession>
<accession>Q5SQR9</accession>
<accession>Q96LG8</accession>
<accession>Q9UBB0</accession>
<accession>Q9UCX0</accession>
<accession>Q9UQK6</accession>
<reference key="1">
    <citation type="journal article" date="1994" name="Brain Res. Mol. Brain Res.">
        <title>Cloning and expression of a human large-conductance calcium-activated potassium channel.</title>
        <authorList>
            <person name="Dworetzky S.I."/>
            <person name="Trojnacki J.T."/>
            <person name="Gribkoff V.K."/>
        </authorList>
    </citation>
    <scope>NUCLEOTIDE SEQUENCE [MRNA] (ISOFORM 5)</scope>
    <scope>FUNCTION</scope>
    <scope>TRANSPORTER ACTIVITY</scope>
    <source>
        <tissue>Substantia nigra</tissue>
    </source>
</reference>
<reference key="2">
    <citation type="journal article" date="1995" name="Am. J. Physiol.">
        <title>A human calcium-activated potassium channel gene expressed in vascular smooth muscle.</title>
        <authorList>
            <person name="McCobb D.P."/>
            <person name="Fowler N.L."/>
            <person name="Featherstone T."/>
            <person name="Lingle C.J."/>
            <person name="Saito M."/>
            <person name="Krause J.E."/>
            <person name="Salkoff L."/>
        </authorList>
    </citation>
    <scope>NUCLEOTIDE SEQUENCE [MRNA] (ISOFORM 5)</scope>
    <scope>FUNCTION</scope>
    <scope>TRANSPORTER ACTIVITY</scope>
    <source>
        <tissue>Aortic smooth muscle</tissue>
        <tissue>Umbilical smooth muscle</tissue>
    </source>
</reference>
<reference key="3">
    <citation type="journal article" date="2004" name="Nature">
        <title>The DNA sequence and comparative analysis of human chromosome 10.</title>
        <authorList>
            <person name="Deloukas P."/>
            <person name="Earthrowl M.E."/>
            <person name="Grafham D.V."/>
            <person name="Rubenfield M."/>
            <person name="French L."/>
            <person name="Steward C.A."/>
            <person name="Sims S.K."/>
            <person name="Jones M.C."/>
            <person name="Searle S."/>
            <person name="Scott C."/>
            <person name="Howe K."/>
            <person name="Hunt S.E."/>
            <person name="Andrews T.D."/>
            <person name="Gilbert J.G.R."/>
            <person name="Swarbreck D."/>
            <person name="Ashurst J.L."/>
            <person name="Taylor A."/>
            <person name="Battles J."/>
            <person name="Bird C.P."/>
            <person name="Ainscough R."/>
            <person name="Almeida J.P."/>
            <person name="Ashwell R.I.S."/>
            <person name="Ambrose K.D."/>
            <person name="Babbage A.K."/>
            <person name="Bagguley C.L."/>
            <person name="Bailey J."/>
            <person name="Banerjee R."/>
            <person name="Bates K."/>
            <person name="Beasley H."/>
            <person name="Bray-Allen S."/>
            <person name="Brown A.J."/>
            <person name="Brown J.Y."/>
            <person name="Burford D.C."/>
            <person name="Burrill W."/>
            <person name="Burton J."/>
            <person name="Cahill P."/>
            <person name="Camire D."/>
            <person name="Carter N.P."/>
            <person name="Chapman J.C."/>
            <person name="Clark S.Y."/>
            <person name="Clarke G."/>
            <person name="Clee C.M."/>
            <person name="Clegg S."/>
            <person name="Corby N."/>
            <person name="Coulson A."/>
            <person name="Dhami P."/>
            <person name="Dutta I."/>
            <person name="Dunn M."/>
            <person name="Faulkner L."/>
            <person name="Frankish A."/>
            <person name="Frankland J.A."/>
            <person name="Garner P."/>
            <person name="Garnett J."/>
            <person name="Gribble S."/>
            <person name="Griffiths C."/>
            <person name="Grocock R."/>
            <person name="Gustafson E."/>
            <person name="Hammond S."/>
            <person name="Harley J.L."/>
            <person name="Hart E."/>
            <person name="Heath P.D."/>
            <person name="Ho T.P."/>
            <person name="Hopkins B."/>
            <person name="Horne J."/>
            <person name="Howden P.J."/>
            <person name="Huckle E."/>
            <person name="Hynds C."/>
            <person name="Johnson C."/>
            <person name="Johnson D."/>
            <person name="Kana A."/>
            <person name="Kay M."/>
            <person name="Kimberley A.M."/>
            <person name="Kershaw J.K."/>
            <person name="Kokkinaki M."/>
            <person name="Laird G.K."/>
            <person name="Lawlor S."/>
            <person name="Lee H.M."/>
            <person name="Leongamornlert D.A."/>
            <person name="Laird G."/>
            <person name="Lloyd C."/>
            <person name="Lloyd D.M."/>
            <person name="Loveland J."/>
            <person name="Lovell J."/>
            <person name="McLaren S."/>
            <person name="McLay K.E."/>
            <person name="McMurray A."/>
            <person name="Mashreghi-Mohammadi M."/>
            <person name="Matthews L."/>
            <person name="Milne S."/>
            <person name="Nickerson T."/>
            <person name="Nguyen M."/>
            <person name="Overton-Larty E."/>
            <person name="Palmer S.A."/>
            <person name="Pearce A.V."/>
            <person name="Peck A.I."/>
            <person name="Pelan S."/>
            <person name="Phillimore B."/>
            <person name="Porter K."/>
            <person name="Rice C.M."/>
            <person name="Rogosin A."/>
            <person name="Ross M.T."/>
            <person name="Sarafidou T."/>
            <person name="Sehra H.K."/>
            <person name="Shownkeen R."/>
            <person name="Skuce C.D."/>
            <person name="Smith M."/>
            <person name="Standring L."/>
            <person name="Sycamore N."/>
            <person name="Tester J."/>
            <person name="Thorpe A."/>
            <person name="Torcasso W."/>
            <person name="Tracey A."/>
            <person name="Tromans A."/>
            <person name="Tsolas J."/>
            <person name="Wall M."/>
            <person name="Walsh J."/>
            <person name="Wang H."/>
            <person name="Weinstock K."/>
            <person name="West A.P."/>
            <person name="Willey D.L."/>
            <person name="Whitehead S.L."/>
            <person name="Wilming L."/>
            <person name="Wray P.W."/>
            <person name="Young L."/>
            <person name="Chen Y."/>
            <person name="Lovering R.C."/>
            <person name="Moschonas N.K."/>
            <person name="Siebert R."/>
            <person name="Fechtel K."/>
            <person name="Bentley D."/>
            <person name="Durbin R.M."/>
            <person name="Hubbard T."/>
            <person name="Doucette-Stamm L."/>
            <person name="Beck S."/>
            <person name="Smith D.R."/>
            <person name="Rogers J."/>
        </authorList>
    </citation>
    <scope>NUCLEOTIDE SEQUENCE [LARGE SCALE GENOMIC DNA]</scope>
</reference>
<reference key="4">
    <citation type="submission" date="2005-07" db="EMBL/GenBank/DDBJ databases">
        <authorList>
            <person name="Mural R.J."/>
            <person name="Istrail S."/>
            <person name="Sutton G.G."/>
            <person name="Florea L."/>
            <person name="Halpern A.L."/>
            <person name="Mobarry C.M."/>
            <person name="Lippert R."/>
            <person name="Walenz B."/>
            <person name="Shatkay H."/>
            <person name="Dew I."/>
            <person name="Miller J.R."/>
            <person name="Flanigan M.J."/>
            <person name="Edwards N.J."/>
            <person name="Bolanos R."/>
            <person name="Fasulo D."/>
            <person name="Halldorsson B.V."/>
            <person name="Hannenhalli S."/>
            <person name="Turner R."/>
            <person name="Yooseph S."/>
            <person name="Lu F."/>
            <person name="Nusskern D.R."/>
            <person name="Shue B.C."/>
            <person name="Zheng X.H."/>
            <person name="Zhong F."/>
            <person name="Delcher A.L."/>
            <person name="Huson D.H."/>
            <person name="Kravitz S.A."/>
            <person name="Mouchard L."/>
            <person name="Reinert K."/>
            <person name="Remington K.A."/>
            <person name="Clark A.G."/>
            <person name="Waterman M.S."/>
            <person name="Eichler E.E."/>
            <person name="Adams M.D."/>
            <person name="Hunkapiller M.W."/>
            <person name="Myers E.W."/>
            <person name="Venter J.C."/>
        </authorList>
    </citation>
    <scope>NUCLEOTIDE SEQUENCE [LARGE SCALE GENOMIC DNA]</scope>
</reference>
<reference key="5">
    <citation type="journal article" date="2004" name="Genome Res.">
        <title>The status, quality, and expansion of the NIH full-length cDNA project: the Mammalian Gene Collection (MGC).</title>
        <authorList>
            <consortium name="The MGC Project Team"/>
        </authorList>
    </citation>
    <scope>NUCLEOTIDE SEQUENCE [LARGE SCALE MRNA] (ISOFORMS 5 AND 6)</scope>
    <source>
        <tissue>Cerebellum</tissue>
        <tissue>Neuroectoderm</tissue>
        <tissue>Testis</tissue>
    </source>
</reference>
<reference key="6">
    <citation type="journal article" date="1994" name="Neuron">
        <title>Cloning, expression, and distribution of functionally distinct Ca(2+)-activated K+ channel isoforms from human brain.</title>
        <authorList>
            <person name="Tseng-Crank J."/>
            <person name="Foster C.D."/>
            <person name="Krause J.D."/>
            <person name="Mertz R."/>
            <person name="Godinot N."/>
            <person name="DiChiara T.J."/>
            <person name="Reinhart P.H."/>
        </authorList>
    </citation>
    <scope>NUCLEOTIDE SEQUENCE [MRNA] OF 17-1236 (ISOFORM 5)</scope>
</reference>
<reference key="7">
    <citation type="journal article" date="2002" name="Proc. West. Pharmacol. Soc.">
        <title>Calcium-activated potassium channel expression in human myometrium: effect of pregnancy.</title>
        <authorList>
            <person name="Mazzone J.N."/>
            <person name="Kaiser R.A."/>
            <person name="Buxton I.L.O."/>
        </authorList>
    </citation>
    <scope>NUCLEOTIDE SEQUENCE [MRNA] OF 21-1236 (ISOFORM 5)</scope>
    <source>
        <tissue>Myometrium</tissue>
    </source>
</reference>
<reference key="8">
    <citation type="submission" date="2003-06" db="EMBL/GenBank/DDBJ databases">
        <title>BK variant from human heart.</title>
        <authorList>
            <person name="Naruse K."/>
        </authorList>
    </citation>
    <scope>NUCLEOTIDE SEQUENCE [MRNA] OF 21-1236 (ISOFORM 1)</scope>
    <scope>NUCLEOTIDE SEQUENCE [MRNA] OF 25-1236 (ISOFORM 2)</scope>
    <source>
        <tissue>Heart</tissue>
    </source>
</reference>
<reference key="9">
    <citation type="journal article" date="1994" name="Hum. Mol. Genet.">
        <title>Cloning and characterization of human and mouse homologs of the Drosophila calcium-activated potassium channel gene, slowpoke.</title>
        <authorList>
            <person name="Pallanck L."/>
            <person name="Ganetzky B."/>
        </authorList>
    </citation>
    <scope>NUCLEOTIDE SEQUENCE [MRNA] OF 24-670 (ISOFORM 3)</scope>
    <scope>NUCLEOTIDE SEQUENCE [MRNA] OF 323-1236 (ISOFORM 4)</scope>
    <source>
        <tissue>Muscle</tissue>
    </source>
</reference>
<reference key="10">
    <citation type="book" date="1998" name="Current topics in membranes. The eye's aqueous humor - from secretion to glaucoma">
        <title>Identification of potassium channels in human lens epithelium.</title>
        <editorList>
            <person name="Civan M.M."/>
        </editorList>
        <authorList>
            <person name="Rae J.L."/>
            <person name="Shepard A.R."/>
        </authorList>
    </citation>
    <scope>NUCLEOTIDE SEQUENCE [MRNA] OF 25-1236 (ISOFORM 5)</scope>
    <source>
        <tissue>Lens epithelium</tissue>
    </source>
</reference>
<reference key="11">
    <citation type="journal article" date="1995" name="Recept. Channels">
        <title>Characterization of and modulation by a beta-subunit of a human maxi KCa channel cloned from myometrium.</title>
        <authorList>
            <person name="Wallner M."/>
            <person name="Meera P."/>
            <person name="Ottolia M."/>
            <person name="Kaczorowski G.J."/>
            <person name="Latorre R."/>
            <person name="Garcia M.L."/>
            <person name="Stefani E."/>
            <person name="Toro L."/>
        </authorList>
    </citation>
    <scope>NUCLEOTIDE SEQUENCE [MRNA] OF 38-1236 (ISOFORM 5)</scope>
    <scope>NUCLEOTIDE SEQUENCE [MRNA] OF 693-764 (ISOFORM 4)</scope>
    <source>
        <tissue>Myometrium</tissue>
    </source>
</reference>
<reference key="12">
    <citation type="submission" date="1999-01" db="EMBL/GenBank/DDBJ databases">
        <title>Cloning and characterization of BKCA alpha subunit from human pulmonary artery.</title>
        <authorList>
            <person name="Cairns V.R."/>
            <person name="Aebly M.R."/>
            <person name="Rusch N.J."/>
        </authorList>
    </citation>
    <scope>NUCLEOTIDE SEQUENCE [MRNA] OF 66-1236 (ISOFORM 5)</scope>
    <source>
        <tissue>Pulmonary artery</tissue>
    </source>
</reference>
<reference key="13">
    <citation type="journal article" date="2002" name="J. Neurosci.">
        <title>Cloning and characterization of glioma BK, a novel BK channel isoform highly expressed in human glioma cells.</title>
        <authorList>
            <person name="Liu X."/>
            <person name="Chang Y."/>
            <person name="Reinhart P.H."/>
            <person name="Sontheimer H."/>
            <person name="Chang Y."/>
        </authorList>
    </citation>
    <scope>ALTERNATIVE SPLICING (ISOFORM 7)</scope>
    <scope>TISSUE SPECIFICITY</scope>
    <source>
        <tissue>Glioblastoma</tissue>
    </source>
</reference>
<reference key="14">
    <citation type="journal article" date="2002" name="J. Neurosci.">
        <authorList>
            <person name="Liu X."/>
            <person name="Chang Y."/>
            <person name="Reinhart P.H."/>
            <person name="Sontheimer H."/>
            <person name="Chang Y."/>
        </authorList>
    </citation>
    <scope>ERRATUM OF PUBMED:11880513</scope>
</reference>
<reference key="15">
    <citation type="journal article" date="1996" name="Proc. Natl. Acad. Sci. U.S.A.">
        <title>Determinant for beta-subunit regulation in high-conductance voltage-activated and Ca(2+)-sensitive K+ channels: an additional transmembrane region at the N-terminus.</title>
        <authorList>
            <person name="Wallner M."/>
            <person name="Meera P."/>
            <person name="Toro L."/>
        </authorList>
    </citation>
    <scope>DOMAIN S0</scope>
</reference>
<reference key="16">
    <citation type="journal article" date="1997" name="Proc. Natl. Acad. Sci. U.S.A.">
        <title>Large conductance voltage- and calcium-dependent K+ channel, a distinct member of voltage-dependent ion channels with seven N-terminal transmembrane segments (S0-S6), an extracellular N-terminus, and an intracellular (S9-S10) C-terminus.</title>
        <authorList>
            <person name="Meera P."/>
            <person name="Wallner M."/>
            <person name="Song M."/>
            <person name="Toro L."/>
        </authorList>
    </citation>
    <scope>MEMBRANE TOPOLOGY</scope>
    <scope>DOMAIN PORE FORMING</scope>
</reference>
<reference key="17">
    <citation type="journal article" date="1998" name="J. Biol. Chem.">
        <title>Role of the S4 segment in a voltage-dependent calcium-sensitive potassium (hSlo) channel.</title>
        <authorList>
            <person name="Diaz L."/>
            <person name="Meera P."/>
            <person name="Amigo J."/>
            <person name="Stefani E."/>
            <person name="Alvarez O."/>
            <person name="Toro L."/>
            <person name="Latorre R."/>
        </authorList>
    </citation>
    <scope>DOMAIN S4</scope>
    <scope>MUTAGENESIS OF LEU-269; ARG-272; ARG-275; ARG-278; GLN-281 AND GLU-284</scope>
</reference>
<reference key="18">
    <citation type="journal article" date="1999" name="Proc. Natl. Acad. Sci. U.S.A.">
        <title>Molecular basis of fast inactivation in voltage and Ca2+-activated K+ channels: a transmembrane beta-subunit homolog.</title>
        <authorList>
            <person name="Wallner M."/>
            <person name="Meera P."/>
            <person name="Toro L."/>
        </authorList>
    </citation>
    <scope>INTERACTION WITH KCNMB2</scope>
</reference>
<reference key="19">
    <citation type="journal article" date="2000" name="J. Biol. Chem.">
        <title>Cloning and functional characterization of novel large conductance calcium-activated potassium channel beta subunits, hKCNMB3 and hKCNMB4.</title>
        <authorList>
            <person name="Brenner R."/>
            <person name="Jegla T.J."/>
            <person name="Wickenden A."/>
            <person name="Liu Y."/>
            <person name="Aldrich R.W."/>
        </authorList>
    </citation>
    <scope>INTERACTION WITH KCNMB3 AND KCNMB4</scope>
</reference>
<reference key="20">
    <citation type="journal article" date="2001" name="Neuron">
        <title>Identification of a novel tetramerization domain in large conductance K(ca) channels.</title>
        <authorList>
            <person name="Quirk J.C."/>
            <person name="Reinhart P.H."/>
        </authorList>
    </citation>
    <scope>HOMOTETRAMERIZATION</scope>
    <scope>MUTAGENESIS OF 354-GLY--GLY-356</scope>
</reference>
<reference key="21">
    <citation type="journal article" date="2002" name="J. Neurosci.">
        <title>Consequences of the stoichiometry of Slo1 alpha and auxiliary beta subunits on functional properties of large-conductance Ca2+-activated K+ channels.</title>
        <authorList>
            <person name="Wang Y.-W."/>
            <person name="Ding J.-P."/>
            <person name="Xia X.-M."/>
            <person name="Lingle C.J."/>
        </authorList>
    </citation>
    <scope>INTERACTION WITH KCNMB1; KCNMB2; KCNMB3 AND KCNMB4</scope>
</reference>
<reference key="22">
    <citation type="journal article" date="2003" name="Nature">
        <title>Haem can bind to and inhibit mammalian calcium-dependent Slo1 BK channels.</title>
        <authorList>
            <person name="Tang X.D."/>
            <person name="Xu R."/>
            <person name="Reynolds M.F."/>
            <person name="Garcia M.L."/>
            <person name="Heinemann S.H."/>
            <person name="Hoshi T."/>
        </authorList>
    </citation>
    <scope>ACTIVITY REGULATION</scope>
    <scope>MUTAGENESIS OF CYS-680 AND HIS-681</scope>
    <scope>DOMAIN HEME-BINDING MOTIF</scope>
    <scope>FUNCTION</scope>
    <scope>TRANSPORTER ACTIVITY</scope>
</reference>
<reference key="23">
    <citation type="journal article" date="2003" name="J. Gen. Physiol.">
        <title>Gating mechanism of BK (Slo1) channels: so near, yet so far.</title>
        <authorList>
            <person name="Magleby K.L."/>
        </authorList>
    </citation>
    <scope>REVIEW</scope>
</reference>
<reference key="24">
    <citation type="journal article" date="2010" name="J. Biol. Chem.">
        <title>Palmitoylation of the S0-S1 linker regulates cell surface expression of voltage- and calcium-activated potassium (BK) channels.</title>
        <authorList>
            <person name="Jeffries O."/>
            <person name="Geiger N."/>
            <person name="Rowe I.C."/>
            <person name="Tian L."/>
            <person name="McClafferty H."/>
            <person name="Chen L."/>
            <person name="Bi D."/>
            <person name="Knaus H.G."/>
            <person name="Ruth P."/>
            <person name="Shipston M.J."/>
        </authorList>
    </citation>
    <scope>SUBCELLULAR LOCATION</scope>
    <scope>PALMITOYLATION AT CYS-118; CYS-119 AND CYS-121</scope>
    <scope>MUTAGENESIS OF CYS-118; CYS-119 AND CYS-121</scope>
</reference>
<reference key="25">
    <citation type="journal article" date="2012" name="J. Biol. Chem.">
        <title>Distinct acyl protein transferases and thioesterases control surface expression of calcium-activated potassium channels.</title>
        <authorList>
            <person name="Tian L."/>
            <person name="McClafferty H."/>
            <person name="Knaus H.G."/>
            <person name="Ruth P."/>
            <person name="Shipston M.J."/>
        </authorList>
    </citation>
    <scope>SUBCELLULAR LOCATION</scope>
    <scope>PALMITOYLATION AT CYS-118; CYS-119 AND CYS-121</scope>
    <scope>DEPALMITOYLATION</scope>
    <scope>MUTAGENESIS OF CYS-118; CYS-119 AND CYS-121</scope>
</reference>
<reference key="26">
    <citation type="journal article" date="2010" name="Nature">
        <title>LRRC26 auxiliary protein allows BK channel activation at resting voltage without calcium.</title>
        <authorList>
            <person name="Yan J."/>
            <person name="Aldrich R.W."/>
        </authorList>
    </citation>
    <scope>INTERACTION WITH LRRC26</scope>
</reference>
<reference key="27">
    <citation type="journal article" date="2010" name="J. Pharmacol. Exp. Ther.">
        <title>Characterizing the role of Thr352 in the inhibition of the large conductance Ca2+-activated K+ channels by 1-[1-Hexyl-6-(methyloxy)-1H-indazol-3-yl]-2-methyl-1-propanone.</title>
        <authorList>
            <person name="Gordon E."/>
            <person name="Semus S.F."/>
            <person name="Lozinskaya I.M."/>
            <person name="Lin Z."/>
            <person name="Xu X."/>
        </authorList>
    </citation>
    <scope>MUTAGENESIS OF THR-352; PHE-380; ALA-381 AND VAL-384</scope>
</reference>
<reference key="28">
    <citation type="journal article" date="2012" name="Proc. Natl. Acad. Sci. U.S.A.">
        <title>BK potassium channel modulation by leucine-rich repeat-containing proteins.</title>
        <authorList>
            <person name="Yan J."/>
            <person name="Aldrich R.W."/>
        </authorList>
    </citation>
    <scope>INTERACTION WITH GAMMA SUBUNITS LRRC26; LRRC38; LRRC52 AND LRRC55</scope>
</reference>
<reference key="29">
    <citation type="journal article" date="2010" name="Science">
        <title>Structure of the human BK channel Ca2+-activation apparatus at 3.0 A resolution.</title>
        <authorList>
            <person name="Yuan P."/>
            <person name="Leonetti M.D."/>
            <person name="Pico A.R."/>
            <person name="Hsiung Y."/>
            <person name="MacKinnon R."/>
        </authorList>
    </citation>
    <scope>X-RAY CRYSTALLOGRAPHY (3.0 ANGSTROMS) OF 406-1179</scope>
    <scope>CALCIUM-BINDING SITES</scope>
    <scope>SUBUNIT</scope>
</reference>
<reference key="30">
    <citation type="journal article" date="2005" name="Nat. Genet.">
        <title>Calcium-sensitive potassium channelopathy in human epilepsy and paroxysmal movement disorder.</title>
        <authorList>
            <person name="Du W."/>
            <person name="Bautista J.F."/>
            <person name="Yang H."/>
            <person name="Diez-Sampedro A."/>
            <person name="You S.-A."/>
            <person name="Wang L."/>
            <person name="Kotagal P."/>
            <person name="Lueders H.O."/>
            <person name="Shi J."/>
            <person name="Cui J."/>
            <person name="Richerson G.B."/>
            <person name="Wang Q.K."/>
        </authorList>
    </citation>
    <scope>INVOLVEMENT IN PNKD3</scope>
    <scope>VARIANT PNKD3 GLY-434</scope>
</reference>
<reference key="31">
    <citation type="journal article" date="2015" name="Mov. Disord.">
        <title>De novo KCNMA1 mutations in children with early-onset paroxysmal dyskinesia and developmental delay.</title>
        <authorList>
            <person name="Zhang Z.B."/>
            <person name="Tian M.Q."/>
            <person name="Gao K."/>
            <person name="Jiang Y.W."/>
            <person name="Wu Y."/>
        </authorList>
    </citation>
    <scope>INVOLVEMENT IN PNKD3</scope>
    <scope>VARIANTS PNKD3 LYS-884 AND SER-1053</scope>
</reference>
<reference key="32">
    <citation type="journal article" date="2016" name="Hum. Genet.">
        <title>Homozygous KCNMA1 mutation as a cause of cerebellar atrophy, developmental delay and seizures.</title>
        <authorList>
            <person name="Tabarki B."/>
            <person name="AlMajhad N."/>
            <person name="AlHashem A."/>
            <person name="Shaheen R."/>
            <person name="Alkuraya F.S."/>
        </authorList>
    </citation>
    <scope>INVOLVEMENT IN CADEDS</scope>
</reference>
<reference key="33">
    <citation type="journal article" date="2018" name="Eur. J. Hum. Genet.">
        <title>De novo BK channel variant causes epilepsy by affecting voltage gating but not Ca2+ sensitivity.</title>
        <authorList>
            <person name="Li X."/>
            <person name="Poschmann S."/>
            <person name="Chen Q."/>
            <person name="Fazeli W."/>
            <person name="Oundjian N.J."/>
            <person name="Snoeijen-Schouwenaars F.M."/>
            <person name="Fricke O."/>
            <person name="Kamsteeg E.J."/>
            <person name="Willemsen M."/>
            <person name="Wang Q.K."/>
        </authorList>
    </citation>
    <scope>FUNCTION</scope>
    <scope>INVOLVEMENT IN EIG16</scope>
    <scope>VARIANT EIG16 SER-1053</scope>
    <scope>CHARACTERIZATION OF VARIANT EIG16 SER-1053</scope>
    <scope>VARIANTS ASN-518; ALA-656 AND SER-1217</scope>
    <scope>CHARACTERIZATION OF VARIANTS ASN-518; ALA-656 AND SER-1217</scope>
    <scope>TRANSPORTER ACTIVITY</scope>
</reference>
<reference key="34">
    <citation type="journal article" date="2019" name="Hum. Mol. Genet.">
        <title>De novo loss-of-function KCNMA1 variants are associated with a new multiple malformation syndrome and a broad spectrum of developmental and neurological phenotypes.</title>
        <authorList>
            <person name="Liang L."/>
            <person name="Li X."/>
            <person name="Moutton S."/>
            <person name="Schrier Vergano S.A."/>
            <person name="Cogne B."/>
            <person name="Saint-Martin A."/>
            <person name="Hurst A.C.E."/>
            <person name="Hu Y."/>
            <person name="Bodamer O."/>
            <person name="Thevenon J."/>
            <person name="Hung C.Y."/>
            <person name="Isidor B."/>
            <person name="Gerard B."/>
            <person name="Rega A."/>
            <person name="Nambot S."/>
            <person name="Lehalle D."/>
            <person name="Duffourd Y."/>
            <person name="Thauvin-Robinet C."/>
            <person name="Faivre L."/>
            <person name="Bezieau S."/>
            <person name="Dure L.S."/>
            <person name="Helbling D.C."/>
            <person name="Bick D."/>
            <person name="Xu C."/>
            <person name="Chen Q."/>
            <person name="Mancini G.M.S."/>
            <person name="Vitobello A."/>
            <person name="Wang Q.K."/>
        </authorList>
    </citation>
    <scope>INVOLVEMENT IN LIWAS</scope>
    <scope>VARIANT LIWAS ARG-375</scope>
    <scope>CHARACTERIZATION OF VARIANT LIWAS ARG-375</scope>
    <scope>FUNCTION</scope>
    <scope>TRANSPORTER ACTIVITY</scope>
</reference>
<reference key="35">
    <citation type="journal article" date="2018" name="Balkan Med. J.">
        <title>Expanding the phenotype of homozygous KCNMA1 mutations; dyskinesia, epilepsy, intellectual disability, cerebellar and corticospinal tract atrophy.</title>
        <authorList>
            <person name="Yesil G."/>
            <person name="Aralasmak A."/>
            <person name="Akyuez E."/>
            <person name="Icagasioglu D."/>
            <person name="Uygur Sahin T."/>
            <person name="Bayram Y."/>
        </authorList>
    </citation>
    <scope>VARIANT CADEDS 458-ARG--LEU-1236 DEL</scope>
</reference>
<reference evidence="42" key="36">
    <citation type="journal article" date="2020" name="Proc. Natl. Acad. Sci. U.S.A.">
        <title>Melatonin promotes sleep by activating the BK channel in C. elegans.</title>
        <authorList>
            <person name="Niu L."/>
            <person name="Li Y."/>
            <person name="Zong P."/>
            <person name="Liu P."/>
            <person name="Shui Y."/>
            <person name="Chen B."/>
            <person name="Wang Z.W."/>
        </authorList>
    </citation>
    <scope>FUNCTION</scope>
</reference>
<keyword id="KW-0002">3D-structure</keyword>
<keyword id="KW-0025">Alternative splicing</keyword>
<keyword id="KW-0106">Calcium</keyword>
<keyword id="KW-1003">Cell membrane</keyword>
<keyword id="KW-0225">Disease variant</keyword>
<keyword id="KW-0887">Epilepsy</keyword>
<keyword id="KW-0407">Ion channel</keyword>
<keyword id="KW-0406">Ion transport</keyword>
<keyword id="KW-0449">Lipoprotein</keyword>
<keyword id="KW-0460">Magnesium</keyword>
<keyword id="KW-0472">Membrane</keyword>
<keyword id="KW-0479">Metal-binding</keyword>
<keyword id="KW-0564">Palmitate</keyword>
<keyword id="KW-0597">Phosphoprotein</keyword>
<keyword id="KW-0630">Potassium</keyword>
<keyword id="KW-0631">Potassium channel</keyword>
<keyword id="KW-0633">Potassium transport</keyword>
<keyword id="KW-1267">Proteomics identification</keyword>
<keyword id="KW-1185">Reference proteome</keyword>
<keyword id="KW-0812">Transmembrane</keyword>
<keyword id="KW-1133">Transmembrane helix</keyword>
<keyword id="KW-0813">Transport</keyword>
<keyword id="KW-0851">Voltage-gated channel</keyword>
<evidence type="ECO:0000250" key="1"/>
<evidence type="ECO:0000250" key="2">
    <source>
        <dbReference type="UniProtKB" id="B7ZC96"/>
    </source>
</evidence>
<evidence type="ECO:0000250" key="3">
    <source>
        <dbReference type="UniProtKB" id="Q08460"/>
    </source>
</evidence>
<evidence type="ECO:0000250" key="4">
    <source>
        <dbReference type="UniProtKB" id="Q28204"/>
    </source>
</evidence>
<evidence type="ECO:0000255" key="5"/>
<evidence type="ECO:0000255" key="6">
    <source>
        <dbReference type="PROSITE-ProRule" id="PRU00543"/>
    </source>
</evidence>
<evidence type="ECO:0000256" key="7">
    <source>
        <dbReference type="SAM" id="MobiDB-lite"/>
    </source>
</evidence>
<evidence type="ECO:0000269" key="8">
    <source>
    </source>
</evidence>
<evidence type="ECO:0000269" key="9">
    <source>
    </source>
</evidence>
<evidence type="ECO:0000269" key="10">
    <source>
    </source>
</evidence>
<evidence type="ECO:0000269" key="11">
    <source>
    </source>
</evidence>
<evidence type="ECO:0000269" key="12">
    <source>
    </source>
</evidence>
<evidence type="ECO:0000269" key="13">
    <source>
    </source>
</evidence>
<evidence type="ECO:0000269" key="14">
    <source>
    </source>
</evidence>
<evidence type="ECO:0000269" key="15">
    <source>
    </source>
</evidence>
<evidence type="ECO:0000269" key="16">
    <source>
    </source>
</evidence>
<evidence type="ECO:0000269" key="17">
    <source>
    </source>
</evidence>
<evidence type="ECO:0000269" key="18">
    <source>
    </source>
</evidence>
<evidence type="ECO:0000269" key="19">
    <source>
    </source>
</evidence>
<evidence type="ECO:0000269" key="20">
    <source>
    </source>
</evidence>
<evidence type="ECO:0000269" key="21">
    <source>
    </source>
</evidence>
<evidence type="ECO:0000269" key="22">
    <source>
    </source>
</evidence>
<evidence type="ECO:0000269" key="23">
    <source>
    </source>
</evidence>
<evidence type="ECO:0000269" key="24">
    <source>
    </source>
</evidence>
<evidence type="ECO:0000269" key="25">
    <source>
    </source>
</evidence>
<evidence type="ECO:0000269" key="26">
    <source>
    </source>
</evidence>
<evidence type="ECO:0000269" key="27">
    <source>
    </source>
</evidence>
<evidence type="ECO:0000269" key="28">
    <source>
    </source>
</evidence>
<evidence type="ECO:0000269" key="29">
    <source>
    </source>
</evidence>
<evidence type="ECO:0000269" key="30">
    <source>
    </source>
</evidence>
<evidence type="ECO:0000269" key="31">
    <source>
    </source>
</evidence>
<evidence type="ECO:0000303" key="32">
    <source>
    </source>
</evidence>
<evidence type="ECO:0000303" key="33">
    <source>
    </source>
</evidence>
<evidence type="ECO:0000303" key="34">
    <source>
    </source>
</evidence>
<evidence type="ECO:0000303" key="35">
    <source>
    </source>
</evidence>
<evidence type="ECO:0000303" key="36">
    <source>
    </source>
</evidence>
<evidence type="ECO:0000303" key="37">
    <source>
    </source>
</evidence>
<evidence type="ECO:0000303" key="38">
    <source>
    </source>
</evidence>
<evidence type="ECO:0000303" key="39">
    <source ref="10"/>
</evidence>
<evidence type="ECO:0000303" key="40">
    <source ref="12"/>
</evidence>
<evidence type="ECO:0000303" key="41">
    <source ref="8"/>
</evidence>
<evidence type="ECO:0000305" key="42"/>
<evidence type="ECO:0000312" key="43">
    <source>
        <dbReference type="HGNC" id="HGNC:6284"/>
    </source>
</evidence>
<evidence type="ECO:0007829" key="44">
    <source>
        <dbReference type="PDB" id="3MT5"/>
    </source>
</evidence>
<evidence type="ECO:0007829" key="45">
    <source>
        <dbReference type="PDB" id="3NAF"/>
    </source>
</evidence>
<evidence type="ECO:0007829" key="46">
    <source>
        <dbReference type="PDB" id="6ND0"/>
    </source>
</evidence>
<evidence type="ECO:0007829" key="47">
    <source>
        <dbReference type="PDB" id="6V22"/>
    </source>
</evidence>
<evidence type="ECO:0007829" key="48">
    <source>
        <dbReference type="PDB" id="6V35"/>
    </source>
</evidence>
<evidence type="ECO:0007829" key="49">
    <source>
        <dbReference type="PDB" id="6V5A"/>
    </source>
</evidence>
<evidence type="ECO:0007829" key="50">
    <source>
        <dbReference type="PDB" id="7YO3"/>
    </source>
</evidence>
<evidence type="ECO:0007829" key="51">
    <source>
        <dbReference type="PDB" id="8GHF"/>
    </source>
</evidence>
<dbReference type="EMBL" id="U13913">
    <property type="protein sequence ID" value="AAA85104.1"/>
    <property type="molecule type" value="mRNA"/>
</dbReference>
<dbReference type="EMBL" id="U23767">
    <property type="protein sequence ID" value="AAA92290.1"/>
    <property type="molecule type" value="mRNA"/>
</dbReference>
<dbReference type="EMBL" id="AC011439">
    <property type="status" value="NOT_ANNOTATED_CDS"/>
    <property type="molecule type" value="Genomic_DNA"/>
</dbReference>
<dbReference type="EMBL" id="AC021032">
    <property type="status" value="NOT_ANNOTATED_CDS"/>
    <property type="molecule type" value="Genomic_DNA"/>
</dbReference>
<dbReference type="EMBL" id="AL157833">
    <property type="status" value="NOT_ANNOTATED_CDS"/>
    <property type="molecule type" value="Genomic_DNA"/>
</dbReference>
<dbReference type="EMBL" id="AL627447">
    <property type="status" value="NOT_ANNOTATED_CDS"/>
    <property type="molecule type" value="Genomic_DNA"/>
</dbReference>
<dbReference type="EMBL" id="AL731556">
    <property type="status" value="NOT_ANNOTATED_CDS"/>
    <property type="molecule type" value="Genomic_DNA"/>
</dbReference>
<dbReference type="EMBL" id="AL731560">
    <property type="status" value="NOT_ANNOTATED_CDS"/>
    <property type="molecule type" value="Genomic_DNA"/>
</dbReference>
<dbReference type="EMBL" id="AC067745">
    <property type="status" value="NOT_ANNOTATED_CDS"/>
    <property type="molecule type" value="Genomic_DNA"/>
</dbReference>
<dbReference type="EMBL" id="AL607069">
    <property type="status" value="NOT_ANNOTATED_CDS"/>
    <property type="molecule type" value="Genomic_DNA"/>
</dbReference>
<dbReference type="EMBL" id="AL731575">
    <property type="status" value="NOT_ANNOTATED_CDS"/>
    <property type="molecule type" value="Genomic_DNA"/>
</dbReference>
<dbReference type="EMBL" id="CH471083">
    <property type="protein sequence ID" value="EAW54599.1"/>
    <property type="molecule type" value="Genomic_DNA"/>
</dbReference>
<dbReference type="EMBL" id="BC062659">
    <property type="protein sequence ID" value="AAH62659.1"/>
    <property type="molecule type" value="mRNA"/>
</dbReference>
<dbReference type="EMBL" id="BC137115">
    <property type="protein sequence ID" value="AAI37116.1"/>
    <property type="molecule type" value="mRNA"/>
</dbReference>
<dbReference type="EMBL" id="BC137137">
    <property type="protein sequence ID" value="AAI37138.1"/>
    <property type="molecule type" value="mRNA"/>
</dbReference>
<dbReference type="EMBL" id="U11717">
    <property type="protein sequence ID" value="AAC50353.1"/>
    <property type="status" value="ALT_INIT"/>
    <property type="molecule type" value="mRNA"/>
</dbReference>
<dbReference type="EMBL" id="AY040849">
    <property type="protein sequence ID" value="AAK91504.1"/>
    <property type="status" value="ALT_INIT"/>
    <property type="molecule type" value="mRNA"/>
</dbReference>
<dbReference type="EMBL" id="AB113575">
    <property type="protein sequence ID" value="BAD06397.1"/>
    <property type="molecule type" value="mRNA"/>
</dbReference>
<dbReference type="EMBL" id="AB113382">
    <property type="protein sequence ID" value="BAD06365.1"/>
    <property type="status" value="ALT_INIT"/>
    <property type="molecule type" value="mRNA"/>
</dbReference>
<dbReference type="EMBL" id="U02632">
    <property type="protein sequence ID" value="AAA50173.1"/>
    <property type="molecule type" value="mRNA"/>
</dbReference>
<dbReference type="EMBL" id="U09384">
    <property type="protein sequence ID" value="AAA50216.1"/>
    <property type="status" value="ALT_SEQ"/>
    <property type="molecule type" value="mRNA"/>
</dbReference>
<dbReference type="EMBL" id="AF025999">
    <property type="protein sequence ID" value="AAB88802.1"/>
    <property type="molecule type" value="mRNA"/>
</dbReference>
<dbReference type="EMBL" id="U11058">
    <property type="protein sequence ID" value="AAB65837.1"/>
    <property type="status" value="ALT_INIT"/>
    <property type="molecule type" value="mRNA"/>
</dbReference>
<dbReference type="EMBL" id="AF118141">
    <property type="protein sequence ID" value="AAD31173.1"/>
    <property type="molecule type" value="mRNA"/>
</dbReference>
<dbReference type="CCDS" id="CCDS53545.1">
    <molecule id="Q12791-2"/>
</dbReference>
<dbReference type="CCDS" id="CCDS60569.1">
    <molecule id="Q12791-1"/>
</dbReference>
<dbReference type="CCDS" id="CCDS60571.1">
    <molecule id="Q12791-6"/>
</dbReference>
<dbReference type="CCDS" id="CCDS7352.1">
    <molecule id="Q12791-5"/>
</dbReference>
<dbReference type="PIR" id="I38596">
    <property type="entry name" value="I38596"/>
</dbReference>
<dbReference type="PIR" id="S62904">
    <property type="entry name" value="S62904"/>
</dbReference>
<dbReference type="RefSeq" id="NP_001014797.1">
    <property type="nucleotide sequence ID" value="NM_001014797.2"/>
</dbReference>
<dbReference type="RefSeq" id="NP_001154824.1">
    <molecule id="Q12791-1"/>
    <property type="nucleotide sequence ID" value="NM_001161352.2"/>
</dbReference>
<dbReference type="RefSeq" id="NP_001154825.1">
    <molecule id="Q12791-2"/>
    <property type="nucleotide sequence ID" value="NM_001161353.2"/>
</dbReference>
<dbReference type="RefSeq" id="NP_001258447.1">
    <property type="nucleotide sequence ID" value="NM_001271518.1"/>
</dbReference>
<dbReference type="RefSeq" id="NP_001258451.1">
    <molecule id="Q12791-6"/>
    <property type="nucleotide sequence ID" value="NM_001271522.2"/>
</dbReference>
<dbReference type="RefSeq" id="NP_002238.2">
    <molecule id="Q12791-5"/>
    <property type="nucleotide sequence ID" value="NM_002247.3"/>
</dbReference>
<dbReference type="PDB" id="2K44">
    <property type="method" value="NMR"/>
    <property type="chains" value="A=257-284"/>
</dbReference>
<dbReference type="PDB" id="3MT5">
    <property type="method" value="X-ray"/>
    <property type="resolution" value="3.00 A"/>
    <property type="chains" value="A=406-1179"/>
</dbReference>
<dbReference type="PDB" id="3NAF">
    <property type="method" value="X-ray"/>
    <property type="resolution" value="3.10 A"/>
    <property type="chains" value="A=395-681, A=782-1182"/>
</dbReference>
<dbReference type="PDB" id="6ND0">
    <property type="method" value="EM"/>
    <property type="resolution" value="3.50 A"/>
    <property type="chains" value="A/B/C/D=292-1175"/>
</dbReference>
<dbReference type="PDB" id="6V22">
    <property type="method" value="EM"/>
    <property type="resolution" value="3.20 A"/>
    <property type="chains" value="A/B/C/D=66-1179"/>
</dbReference>
<dbReference type="PDB" id="6V35">
    <property type="method" value="EM"/>
    <property type="resolution" value="3.50 A"/>
    <property type="chains" value="A/B/C/D=66-1179"/>
</dbReference>
<dbReference type="PDB" id="6V38">
    <property type="method" value="EM"/>
    <property type="resolution" value="3.80 A"/>
    <property type="chains" value="A/B/C/D=66-1179"/>
</dbReference>
<dbReference type="PDB" id="6V3G">
    <property type="method" value="EM"/>
    <property type="resolution" value="4.00 A"/>
    <property type="chains" value="A/B/C/D=66-1179"/>
</dbReference>
<dbReference type="PDB" id="6V5A">
    <property type="method" value="X-ray"/>
    <property type="resolution" value="2.00 A"/>
    <property type="chains" value="A=406-1179"/>
</dbReference>
<dbReference type="PDB" id="7YNZ">
    <property type="method" value="EM"/>
    <property type="resolution" value="3.50 A"/>
    <property type="chains" value="A/C/E/G=66-1179"/>
</dbReference>
<dbReference type="PDB" id="7YO0">
    <property type="method" value="EM"/>
    <property type="resolution" value="3.60 A"/>
    <property type="chains" value="A/C/E/G=66-1179"/>
</dbReference>
<dbReference type="PDB" id="7YO1">
    <property type="method" value="EM"/>
    <property type="resolution" value="3.60 A"/>
    <property type="chains" value="A/C/E/G=66-1179"/>
</dbReference>
<dbReference type="PDB" id="7YO2">
    <property type="method" value="EM"/>
    <property type="resolution" value="3.30 A"/>
    <property type="chains" value="A/B/C/D=66-1179"/>
</dbReference>
<dbReference type="PDB" id="7YO3">
    <property type="method" value="EM"/>
    <property type="resolution" value="3.10 A"/>
    <property type="chains" value="A=66-1179"/>
</dbReference>
<dbReference type="PDB" id="7YO4">
    <property type="method" value="EM"/>
    <property type="resolution" value="3.90 A"/>
    <property type="chains" value="A/C/E/G=66-1179"/>
</dbReference>
<dbReference type="PDB" id="7YO5">
    <property type="method" value="EM"/>
    <property type="resolution" value="3.90 A"/>
    <property type="chains" value="A/B/C/D=66-1179"/>
</dbReference>
<dbReference type="PDB" id="8GH9">
    <property type="method" value="EM"/>
    <property type="resolution" value="3.80 A"/>
    <property type="chains" value="A/B/C/D=67-1179"/>
</dbReference>
<dbReference type="PDB" id="8GHF">
    <property type="method" value="EM"/>
    <property type="resolution" value="2.70 A"/>
    <property type="chains" value="A/B/C/D=67-1179"/>
</dbReference>
<dbReference type="PDB" id="8GHG">
    <property type="method" value="EM"/>
    <property type="resolution" value="3.30 A"/>
    <property type="chains" value="A/B/C/D=67-1179"/>
</dbReference>
<dbReference type="PDB" id="8V60">
    <property type="method" value="EM"/>
    <property type="resolution" value="2.43 A"/>
    <property type="chains" value="A/B/C/D=66-1179"/>
</dbReference>
<dbReference type="PDB" id="8V63">
    <property type="method" value="EM"/>
    <property type="resolution" value="2.72 A"/>
    <property type="chains" value="A/B/C/D=66-1179"/>
</dbReference>
<dbReference type="PDB" id="8V64">
    <property type="method" value="EM"/>
    <property type="resolution" value="2.60 A"/>
    <property type="chains" value="A/B/C/D=66-1179"/>
</dbReference>
<dbReference type="PDB" id="8VAV">
    <property type="method" value="EM"/>
    <property type="resolution" value="3.13 A"/>
    <property type="chains" value="A/B/C/D=66-1179"/>
</dbReference>
<dbReference type="PDB" id="8VAZ">
    <property type="method" value="EM"/>
    <property type="resolution" value="2.82 A"/>
    <property type="chains" value="A/B/C/D=66-1179"/>
</dbReference>
<dbReference type="PDB" id="8Z3S">
    <property type="method" value="EM"/>
    <property type="resolution" value="3.90 A"/>
    <property type="chains" value="A/B/C/D=66-1179"/>
</dbReference>
<dbReference type="PDB" id="9CZH">
    <property type="method" value="EM"/>
    <property type="resolution" value="2.90 A"/>
    <property type="chains" value="A/B/C/D=66-1179"/>
</dbReference>
<dbReference type="PDB" id="9CZJ">
    <property type="method" value="EM"/>
    <property type="resolution" value="3.54 A"/>
    <property type="chains" value="A/B/C/D=66-1179"/>
</dbReference>
<dbReference type="PDB" id="9CZK">
    <property type="method" value="EM"/>
    <property type="resolution" value="3.50 A"/>
    <property type="chains" value="A/B/C/D=66-1179"/>
</dbReference>
<dbReference type="PDB" id="9CZM">
    <property type="method" value="EM"/>
    <property type="resolution" value="2.57 A"/>
    <property type="chains" value="A/B/C/D=66-1179"/>
</dbReference>
<dbReference type="PDB" id="9CZO">
    <property type="method" value="EM"/>
    <property type="resolution" value="2.87 A"/>
    <property type="chains" value="A/B/C/D=66-1179"/>
</dbReference>
<dbReference type="PDB" id="9CZQ">
    <property type="method" value="EM"/>
    <property type="resolution" value="2.88 A"/>
    <property type="chains" value="A/B/C/D=66-1179"/>
</dbReference>
<dbReference type="PDB" id="9D18">
    <property type="method" value="EM"/>
    <property type="resolution" value="2.88 A"/>
    <property type="chains" value="A/B/C/D=66-1179"/>
</dbReference>
<dbReference type="PDB" id="9D19">
    <property type="method" value="EM"/>
    <property type="resolution" value="2.88 A"/>
    <property type="chains" value="A/B/C/D=66-1179"/>
</dbReference>
<dbReference type="PDB" id="9JO3">
    <property type="method" value="EM"/>
    <property type="resolution" value="2.80 A"/>
    <property type="chains" value="A/B/C/D=66-1184"/>
</dbReference>
<dbReference type="PDB" id="9JO4">
    <property type="method" value="EM"/>
    <property type="resolution" value="3.40 A"/>
    <property type="chains" value="A/B/C/D=66-1179"/>
</dbReference>
<dbReference type="PDBsum" id="2K44"/>
<dbReference type="PDBsum" id="3MT5"/>
<dbReference type="PDBsum" id="3NAF"/>
<dbReference type="PDBsum" id="6ND0"/>
<dbReference type="PDBsum" id="6V22"/>
<dbReference type="PDBsum" id="6V35"/>
<dbReference type="PDBsum" id="6V38"/>
<dbReference type="PDBsum" id="6V3G"/>
<dbReference type="PDBsum" id="6V5A"/>
<dbReference type="PDBsum" id="7YNZ"/>
<dbReference type="PDBsum" id="7YO0"/>
<dbReference type="PDBsum" id="7YO1"/>
<dbReference type="PDBsum" id="7YO2"/>
<dbReference type="PDBsum" id="7YO3"/>
<dbReference type="PDBsum" id="7YO4"/>
<dbReference type="PDBsum" id="7YO5"/>
<dbReference type="PDBsum" id="8GH9"/>
<dbReference type="PDBsum" id="8GHF"/>
<dbReference type="PDBsum" id="8GHG"/>
<dbReference type="PDBsum" id="8V60"/>
<dbReference type="PDBsum" id="8V63"/>
<dbReference type="PDBsum" id="8V64"/>
<dbReference type="PDBsum" id="8VAV"/>
<dbReference type="PDBsum" id="8VAZ"/>
<dbReference type="PDBsum" id="8Z3S"/>
<dbReference type="PDBsum" id="9CZH"/>
<dbReference type="PDBsum" id="9CZJ"/>
<dbReference type="PDBsum" id="9CZK"/>
<dbReference type="PDBsum" id="9CZM"/>
<dbReference type="PDBsum" id="9CZO"/>
<dbReference type="PDBsum" id="9CZQ"/>
<dbReference type="PDBsum" id="9D18"/>
<dbReference type="PDBsum" id="9D19"/>
<dbReference type="PDBsum" id="9JO3"/>
<dbReference type="PDBsum" id="9JO4"/>
<dbReference type="BMRB" id="Q12791"/>
<dbReference type="EMDB" id="EMD-0439"/>
<dbReference type="EMDB" id="EMD-21025"/>
<dbReference type="EMDB" id="EMD-21028"/>
<dbReference type="EMDB" id="EMD-21029"/>
<dbReference type="EMDB" id="EMD-21036"/>
<dbReference type="EMDB" id="EMD-39753"/>
<dbReference type="EMDB" id="EMD-40038"/>
<dbReference type="EMDB" id="EMD-40044"/>
<dbReference type="EMDB" id="EMD-40045"/>
<dbReference type="EMDB" id="EMD-42986"/>
<dbReference type="EMDB" id="EMD-42988"/>
<dbReference type="EMDB" id="EMD-42989"/>
<dbReference type="EMDB" id="EMD-43106"/>
<dbReference type="EMDB" id="EMD-43107"/>
<dbReference type="EMDB" id="EMD-43108"/>
<dbReference type="EMDB" id="EMD-46416"/>
<dbReference type="EMDB" id="EMD-46418"/>
<dbReference type="EMDB" id="EMD-46419"/>
<dbReference type="EMDB" id="EMD-46421"/>
<dbReference type="EMDB" id="EMD-46423"/>
<dbReference type="EMDB" id="EMD-46425"/>
<dbReference type="EMDB" id="EMD-46467"/>
<dbReference type="EMDB" id="EMD-46468"/>
<dbReference type="EMDB" id="EMD-61642"/>
<dbReference type="EMDB" id="EMD-61643"/>
<dbReference type="SMR" id="Q12791"/>
<dbReference type="BioGRID" id="109979">
    <property type="interactions" value="19"/>
</dbReference>
<dbReference type="CORUM" id="Q12791"/>
<dbReference type="DIP" id="DIP-29729N"/>
<dbReference type="FunCoup" id="Q12791">
    <property type="interactions" value="1262"/>
</dbReference>
<dbReference type="IntAct" id="Q12791">
    <property type="interactions" value="6"/>
</dbReference>
<dbReference type="MINT" id="Q12791"/>
<dbReference type="STRING" id="9606.ENSP00000286628"/>
<dbReference type="BindingDB" id="Q12791"/>
<dbReference type="ChEMBL" id="CHEMBL4304"/>
<dbReference type="DrugBank" id="DB00436">
    <property type="generic name" value="Bendroflumethiazide"/>
</dbReference>
<dbReference type="DrugBank" id="DB00356">
    <property type="generic name" value="Chlorzoxazone"/>
</dbReference>
<dbReference type="DrugBank" id="DB02587">
    <property type="generic name" value="Colforsin"/>
</dbReference>
<dbReference type="DrugBank" id="DB04209">
    <property type="generic name" value="Dequalinium"/>
</dbReference>
<dbReference type="DrugBank" id="DB01159">
    <property type="generic name" value="Halothane"/>
</dbReference>
<dbReference type="DrugBank" id="DB00999">
    <property type="generic name" value="Hydrochlorothiazide"/>
</dbReference>
<dbReference type="DrugBank" id="DB00774">
    <property type="generic name" value="Hydroflumethiazide"/>
</dbReference>
<dbReference type="DrugBank" id="DB01110">
    <property type="generic name" value="Miconazole"/>
</dbReference>
<dbReference type="DrugBank" id="DB01054">
    <property type="generic name" value="Nitrendipine"/>
</dbReference>
<dbReference type="DrugBank" id="DB00721">
    <property type="generic name" value="Procaine"/>
</dbReference>
<dbReference type="DrugBank" id="DB00867">
    <property type="generic name" value="Ritodrine"/>
</dbReference>
<dbReference type="DrugBank" id="DB09089">
    <property type="generic name" value="Trimebutine"/>
</dbReference>
<dbReference type="DrugCentral" id="Q12791"/>
<dbReference type="GuidetoPHARMACOLOGY" id="380"/>
<dbReference type="TCDB" id="1.A.1.3.10">
    <property type="family name" value="the voltage-gated ion channel (vic) superfamily"/>
</dbReference>
<dbReference type="GlyConnect" id="1058">
    <property type="glycosylation" value="1 N-Linked glycan (1 site)"/>
</dbReference>
<dbReference type="GlyCosmos" id="Q12791">
    <property type="glycosylation" value="1 site, 1 glycan"/>
</dbReference>
<dbReference type="GlyGen" id="Q12791">
    <property type="glycosylation" value="2 sites, 7 N-linked glycans (1 site), 1 O-linked glycan (1 site)"/>
</dbReference>
<dbReference type="iPTMnet" id="Q12791"/>
<dbReference type="MetOSite" id="Q12791"/>
<dbReference type="PhosphoSitePlus" id="Q12791"/>
<dbReference type="SwissPalm" id="Q12791"/>
<dbReference type="BioMuta" id="KCNMA1"/>
<dbReference type="DMDM" id="46396283"/>
<dbReference type="jPOST" id="Q12791"/>
<dbReference type="MassIVE" id="Q12791"/>
<dbReference type="PaxDb" id="9606-ENSP00000286628"/>
<dbReference type="PeptideAtlas" id="Q12791"/>
<dbReference type="ProteomicsDB" id="30456"/>
<dbReference type="ProteomicsDB" id="58926">
    <molecule id="Q12791-1"/>
</dbReference>
<dbReference type="ProteomicsDB" id="58927">
    <molecule id="Q12791-2"/>
</dbReference>
<dbReference type="ProteomicsDB" id="58928">
    <molecule id="Q12791-3"/>
</dbReference>
<dbReference type="ProteomicsDB" id="58929">
    <molecule id="Q12791-4"/>
</dbReference>
<dbReference type="ProteomicsDB" id="58930">
    <molecule id="Q12791-5"/>
</dbReference>
<dbReference type="ProteomicsDB" id="58931">
    <molecule id="Q12791-6"/>
</dbReference>
<dbReference type="ProteomicsDB" id="58932">
    <molecule id="Q12791-7"/>
</dbReference>
<dbReference type="ABCD" id="Q12791">
    <property type="antibodies" value="1 sequenced antibody"/>
</dbReference>
<dbReference type="Antibodypedia" id="29733">
    <property type="antibodies" value="334 antibodies from 37 providers"/>
</dbReference>
<dbReference type="DNASU" id="3778"/>
<dbReference type="Ensembl" id="ENST00000286627.10">
    <molecule id="Q12791-5"/>
    <property type="protein sequence ID" value="ENSP00000286627.5"/>
    <property type="gene ID" value="ENSG00000156113.25"/>
</dbReference>
<dbReference type="Ensembl" id="ENST00000286628.14">
    <molecule id="Q12791-1"/>
    <property type="protein sequence ID" value="ENSP00000286628.8"/>
    <property type="gene ID" value="ENSG00000156113.25"/>
</dbReference>
<dbReference type="Ensembl" id="ENST00000434208.6">
    <molecule id="Q12791-4"/>
    <property type="protein sequence ID" value="ENSP00000402150.2"/>
    <property type="gene ID" value="ENSG00000156113.25"/>
</dbReference>
<dbReference type="Ensembl" id="ENST00000480683.2">
    <molecule id="Q12791-6"/>
    <property type="protein sequence ID" value="ENSP00000474686.1"/>
    <property type="gene ID" value="ENSG00000156113.25"/>
</dbReference>
<dbReference type="Ensembl" id="ENST00000626620.3">
    <molecule id="Q12791-2"/>
    <property type="protein sequence ID" value="ENSP00000485867.1"/>
    <property type="gene ID" value="ENSG00000156113.25"/>
</dbReference>
<dbReference type="Ensembl" id="ENST00000638575.1">
    <molecule id="Q12791-7"/>
    <property type="protein sequence ID" value="ENSP00000492049.1"/>
    <property type="gene ID" value="ENSG00000156113.25"/>
</dbReference>
<dbReference type="Ensembl" id="ENST00000638759.1">
    <molecule id="Q12791-3"/>
    <property type="protein sequence ID" value="ENSP00000492632.1"/>
    <property type="gene ID" value="ENSG00000156113.25"/>
</dbReference>
<dbReference type="Ensembl" id="ENST00000640969.1">
    <molecule id="Q12791-4"/>
    <property type="protein sequence ID" value="ENSP00000492200.1"/>
    <property type="gene ID" value="ENSG00000156113.25"/>
</dbReference>
<dbReference type="GeneID" id="3778"/>
<dbReference type="KEGG" id="hsa:3778"/>
<dbReference type="MANE-Select" id="ENST00000286628.14">
    <property type="protein sequence ID" value="ENSP00000286628.8"/>
    <property type="RefSeq nucleotide sequence ID" value="NM_001161352.2"/>
    <property type="RefSeq protein sequence ID" value="NP_001154824.1"/>
</dbReference>
<dbReference type="UCSC" id="uc001jxm.4">
    <molecule id="Q12791-1"/>
    <property type="organism name" value="human"/>
</dbReference>
<dbReference type="AGR" id="HGNC:6284"/>
<dbReference type="CTD" id="3778"/>
<dbReference type="DisGeNET" id="3778"/>
<dbReference type="GeneCards" id="KCNMA1"/>
<dbReference type="HGNC" id="HGNC:6284">
    <property type="gene designation" value="KCNMA1"/>
</dbReference>
<dbReference type="HPA" id="ENSG00000156113">
    <property type="expression patterns" value="Tissue enhanced (endometrium)"/>
</dbReference>
<dbReference type="MalaCards" id="KCNMA1"/>
<dbReference type="MIM" id="600150">
    <property type="type" value="gene"/>
</dbReference>
<dbReference type="MIM" id="609446">
    <property type="type" value="phenotype"/>
</dbReference>
<dbReference type="MIM" id="617643">
    <property type="type" value="phenotype"/>
</dbReference>
<dbReference type="MIM" id="618596">
    <property type="type" value="phenotype"/>
</dbReference>
<dbReference type="MIM" id="618729">
    <property type="type" value="phenotype"/>
</dbReference>
<dbReference type="neXtProt" id="NX_Q12791"/>
<dbReference type="OpenTargets" id="ENSG00000156113"/>
<dbReference type="Orphanet" id="79137">
    <property type="disease" value="Generalized epilepsy-paroxysmal dyskinesia syndrome"/>
</dbReference>
<dbReference type="Orphanet" id="664438">
    <property type="disease" value="Gingival fibromatosis-aortic root dilatation-facial dysmorphism-intellectual disability syndrome"/>
</dbReference>
<dbReference type="PharmGKB" id="PA220"/>
<dbReference type="VEuPathDB" id="HostDB:ENSG00000156113"/>
<dbReference type="eggNOG" id="KOG1420">
    <property type="taxonomic scope" value="Eukaryota"/>
</dbReference>
<dbReference type="GeneTree" id="ENSGT00940000154935"/>
<dbReference type="InParanoid" id="Q12791"/>
<dbReference type="OMA" id="YWCKQCH"/>
<dbReference type="OrthoDB" id="10035564at2759"/>
<dbReference type="PAN-GO" id="Q12791">
    <property type="GO annotations" value="3 GO annotations based on evolutionary models"/>
</dbReference>
<dbReference type="PhylomeDB" id="Q12791"/>
<dbReference type="TreeFam" id="TF314283"/>
<dbReference type="PathwayCommons" id="Q12791"/>
<dbReference type="Reactome" id="R-HSA-1296052">
    <property type="pathway name" value="Ca2+ activated K+ channels"/>
</dbReference>
<dbReference type="Reactome" id="R-HSA-418457">
    <property type="pathway name" value="cGMP effects"/>
</dbReference>
<dbReference type="Reactome" id="R-HSA-9662360">
    <property type="pathway name" value="Sensory processing of sound by inner hair cells of the cochlea"/>
</dbReference>
<dbReference type="Reactome" id="R-HSA-9667769">
    <property type="pathway name" value="Acetylcholine inhibits contraction of outer hair cells"/>
</dbReference>
<dbReference type="SignaLink" id="Q12791"/>
<dbReference type="SIGNOR" id="Q12791"/>
<dbReference type="BioGRID-ORCS" id="3778">
    <property type="hits" value="16 hits in 1158 CRISPR screens"/>
</dbReference>
<dbReference type="ChiTaRS" id="KCNMA1">
    <property type="organism name" value="human"/>
</dbReference>
<dbReference type="EvolutionaryTrace" id="Q12791"/>
<dbReference type="GenomeRNAi" id="3778"/>
<dbReference type="Pharos" id="Q12791">
    <property type="development level" value="Tclin"/>
</dbReference>
<dbReference type="PRO" id="PR:Q12791"/>
<dbReference type="Proteomes" id="UP000005640">
    <property type="component" value="Chromosome 10"/>
</dbReference>
<dbReference type="RNAct" id="Q12791">
    <property type="molecule type" value="protein"/>
</dbReference>
<dbReference type="Bgee" id="ENSG00000156113">
    <property type="expression patterns" value="Expressed in parotid gland and 194 other cell types or tissues"/>
</dbReference>
<dbReference type="ExpressionAtlas" id="Q12791">
    <property type="expression patterns" value="baseline and differential"/>
</dbReference>
<dbReference type="GO" id="GO:0016324">
    <property type="term" value="C:apical plasma membrane"/>
    <property type="evidence" value="ECO:0000314"/>
    <property type="project" value="UniProtKB"/>
</dbReference>
<dbReference type="GO" id="GO:0005901">
    <property type="term" value="C:caveola"/>
    <property type="evidence" value="ECO:0000314"/>
    <property type="project" value="BHF-UCL"/>
</dbReference>
<dbReference type="GO" id="GO:0016020">
    <property type="term" value="C:membrane"/>
    <property type="evidence" value="ECO:0000314"/>
    <property type="project" value="UniProtKB"/>
</dbReference>
<dbReference type="GO" id="GO:0005886">
    <property type="term" value="C:plasma membrane"/>
    <property type="evidence" value="ECO:0000304"/>
    <property type="project" value="Reactome"/>
</dbReference>
<dbReference type="GO" id="GO:0045211">
    <property type="term" value="C:postsynaptic membrane"/>
    <property type="evidence" value="ECO:0000318"/>
    <property type="project" value="GO_Central"/>
</dbReference>
<dbReference type="GO" id="GO:0008076">
    <property type="term" value="C:voltage-gated potassium channel complex"/>
    <property type="evidence" value="ECO:0000314"/>
    <property type="project" value="UniProtKB"/>
</dbReference>
<dbReference type="GO" id="GO:0003779">
    <property type="term" value="F:actin binding"/>
    <property type="evidence" value="ECO:0000314"/>
    <property type="project" value="BHF-UCL"/>
</dbReference>
<dbReference type="GO" id="GO:0015269">
    <property type="term" value="F:calcium-activated potassium channel activity"/>
    <property type="evidence" value="ECO:0000314"/>
    <property type="project" value="UniProtKB"/>
</dbReference>
<dbReference type="GO" id="GO:0042802">
    <property type="term" value="F:identical protein binding"/>
    <property type="evidence" value="ECO:0000353"/>
    <property type="project" value="IntAct"/>
</dbReference>
<dbReference type="GO" id="GO:0060072">
    <property type="term" value="F:large conductance calcium-activated potassium channel activity"/>
    <property type="evidence" value="ECO:0000314"/>
    <property type="project" value="UniProtKB"/>
</dbReference>
<dbReference type="GO" id="GO:0046872">
    <property type="term" value="F:metal ion binding"/>
    <property type="evidence" value="ECO:0007669"/>
    <property type="project" value="UniProtKB-KW"/>
</dbReference>
<dbReference type="GO" id="GO:0005249">
    <property type="term" value="F:voltage-gated potassium channel activity"/>
    <property type="evidence" value="ECO:0000314"/>
    <property type="project" value="UniProtKB"/>
</dbReference>
<dbReference type="GO" id="GO:0030007">
    <property type="term" value="P:intracellular potassium ion homeostasis"/>
    <property type="evidence" value="ECO:0000314"/>
    <property type="project" value="UniProtKB"/>
</dbReference>
<dbReference type="GO" id="GO:0060073">
    <property type="term" value="P:micturition"/>
    <property type="evidence" value="ECO:0000314"/>
    <property type="project" value="UniProtKB"/>
</dbReference>
<dbReference type="GO" id="GO:0045794">
    <property type="term" value="P:negative regulation of cell volume"/>
    <property type="evidence" value="ECO:0000314"/>
    <property type="project" value="UniProtKB"/>
</dbReference>
<dbReference type="GO" id="GO:0043065">
    <property type="term" value="P:positive regulation of apoptotic process"/>
    <property type="evidence" value="ECO:0000315"/>
    <property type="project" value="UniProtKB"/>
</dbReference>
<dbReference type="GO" id="GO:0071805">
    <property type="term" value="P:potassium ion transmembrane transport"/>
    <property type="evidence" value="ECO:0000318"/>
    <property type="project" value="GO_Central"/>
</dbReference>
<dbReference type="GO" id="GO:0006813">
    <property type="term" value="P:potassium ion transport"/>
    <property type="evidence" value="ECO:0000314"/>
    <property type="project" value="UniProtKB"/>
</dbReference>
<dbReference type="GO" id="GO:0042391">
    <property type="term" value="P:regulation of membrane potential"/>
    <property type="evidence" value="ECO:0000314"/>
    <property type="project" value="UniProtKB"/>
</dbReference>
<dbReference type="GO" id="GO:0051592">
    <property type="term" value="P:response to calcium ion"/>
    <property type="evidence" value="ECO:0000314"/>
    <property type="project" value="UniProtKB"/>
</dbReference>
<dbReference type="GO" id="GO:0034465">
    <property type="term" value="P:response to carbon monoxide"/>
    <property type="evidence" value="ECO:0000314"/>
    <property type="project" value="UniProtKB"/>
</dbReference>
<dbReference type="GO" id="GO:0001666">
    <property type="term" value="P:response to hypoxia"/>
    <property type="evidence" value="ECO:0000314"/>
    <property type="project" value="UniProtKB"/>
</dbReference>
<dbReference type="GO" id="GO:0006970">
    <property type="term" value="P:response to osmotic stress"/>
    <property type="evidence" value="ECO:0000314"/>
    <property type="project" value="UniProtKB"/>
</dbReference>
<dbReference type="GO" id="GO:0060083">
    <property type="term" value="P:smooth muscle contraction involved in micturition"/>
    <property type="evidence" value="ECO:0000314"/>
    <property type="project" value="UniProtKB"/>
</dbReference>
<dbReference type="GO" id="GO:0042311">
    <property type="term" value="P:vasodilation"/>
    <property type="evidence" value="ECO:0000318"/>
    <property type="project" value="GO_Central"/>
</dbReference>
<dbReference type="FunFam" id="3.40.50.720:FF:000098">
    <property type="entry name" value="calcium-activated potassium channel subunit alpha-1 isoform X3"/>
    <property type="match status" value="1"/>
</dbReference>
<dbReference type="FunFam" id="3.40.50.720:FF:000005">
    <property type="entry name" value="calcium-activated potassium channel subunit alpha-1 isoform X6"/>
    <property type="match status" value="1"/>
</dbReference>
<dbReference type="FunFam" id="1.10.287.70:FF:000015">
    <property type="entry name" value="Calcium-activated potassium channel subunit alpha-1 isoform X7"/>
    <property type="match status" value="1"/>
</dbReference>
<dbReference type="Gene3D" id="1.10.287.70">
    <property type="match status" value="1"/>
</dbReference>
<dbReference type="Gene3D" id="3.40.50.720">
    <property type="entry name" value="NAD(P)-binding Rossmann-like Domain"/>
    <property type="match status" value="2"/>
</dbReference>
<dbReference type="InterPro" id="IPR005821">
    <property type="entry name" value="Ion_trans_dom"/>
</dbReference>
<dbReference type="InterPro" id="IPR003929">
    <property type="entry name" value="K_chnl_BK_asu"/>
</dbReference>
<dbReference type="InterPro" id="IPR047871">
    <property type="entry name" value="K_chnl_Slo-like"/>
</dbReference>
<dbReference type="InterPro" id="IPR036291">
    <property type="entry name" value="NAD(P)-bd_dom_sf"/>
</dbReference>
<dbReference type="InterPro" id="IPR003148">
    <property type="entry name" value="RCK_N"/>
</dbReference>
<dbReference type="InterPro" id="IPR048735">
    <property type="entry name" value="Slowpoke-like_C"/>
</dbReference>
<dbReference type="PANTHER" id="PTHR10027">
    <property type="entry name" value="CALCIUM-ACTIVATED POTASSIUM CHANNEL ALPHA CHAIN"/>
    <property type="match status" value="1"/>
</dbReference>
<dbReference type="PANTHER" id="PTHR10027:SF28">
    <property type="entry name" value="CALCIUM-ACTIVATED POTASSIUM CHANNEL SUBUNIT ALPHA-1"/>
    <property type="match status" value="1"/>
</dbReference>
<dbReference type="Pfam" id="PF03493">
    <property type="entry name" value="BK_channel_a"/>
    <property type="match status" value="1"/>
</dbReference>
<dbReference type="Pfam" id="PF00520">
    <property type="entry name" value="Ion_trans"/>
    <property type="match status" value="1"/>
</dbReference>
<dbReference type="Pfam" id="PF22614">
    <property type="entry name" value="Slo-like_RCK"/>
    <property type="match status" value="2"/>
</dbReference>
<dbReference type="Pfam" id="PF21014">
    <property type="entry name" value="Slowpoke_C"/>
    <property type="match status" value="1"/>
</dbReference>
<dbReference type="PRINTS" id="PR01449">
    <property type="entry name" value="BKCHANNELA"/>
</dbReference>
<dbReference type="PRINTS" id="PR00169">
    <property type="entry name" value="KCHANNEL"/>
</dbReference>
<dbReference type="SUPFAM" id="SSF51735">
    <property type="entry name" value="NAD(P)-binding Rossmann-fold domains"/>
    <property type="match status" value="1"/>
</dbReference>
<dbReference type="SUPFAM" id="SSF81324">
    <property type="entry name" value="Voltage-gated potassium channels"/>
    <property type="match status" value="1"/>
</dbReference>
<dbReference type="PROSITE" id="PS51201">
    <property type="entry name" value="RCK_N"/>
    <property type="match status" value="2"/>
</dbReference>
<organism>
    <name type="scientific">Homo sapiens</name>
    <name type="common">Human</name>
    <dbReference type="NCBI Taxonomy" id="9606"/>
    <lineage>
        <taxon>Eukaryota</taxon>
        <taxon>Metazoa</taxon>
        <taxon>Chordata</taxon>
        <taxon>Craniata</taxon>
        <taxon>Vertebrata</taxon>
        <taxon>Euteleostomi</taxon>
        <taxon>Mammalia</taxon>
        <taxon>Eutheria</taxon>
        <taxon>Euarchontoglires</taxon>
        <taxon>Primates</taxon>
        <taxon>Haplorrhini</taxon>
        <taxon>Catarrhini</taxon>
        <taxon>Hominidae</taxon>
        <taxon>Homo</taxon>
    </lineage>
</organism>
<name>KCMA1_HUMAN</name>
<proteinExistence type="evidence at protein level"/>
<protein>
    <recommendedName>
        <fullName>Calcium-activated potassium channel subunit alpha-1</fullName>
    </recommendedName>
    <alternativeName>
        <fullName>BK channel</fullName>
    </alternativeName>
    <alternativeName>
        <fullName>BKCA alpha</fullName>
    </alternativeName>
    <alternativeName>
        <fullName>Calcium-activated potassium channel, subfamily M subunit alpha-1</fullName>
    </alternativeName>
    <alternativeName>
        <fullName>K(VCA)alpha</fullName>
    </alternativeName>
    <alternativeName>
        <fullName>KCa1.1</fullName>
    </alternativeName>
    <alternativeName>
        <fullName>Maxi K channel</fullName>
        <shortName>MaxiK</shortName>
    </alternativeName>
    <alternativeName>
        <fullName>Slo-alpha</fullName>
    </alternativeName>
    <alternativeName>
        <fullName>Slo1</fullName>
    </alternativeName>
    <alternativeName>
        <fullName>Slowpoke homolog</fullName>
        <shortName>Slo homolog</shortName>
        <shortName>hSlo</shortName>
    </alternativeName>
</protein>